<protein>
    <recommendedName>
        <fullName evidence="18">Abl interactor 2</fullName>
    </recommendedName>
    <alternativeName>
        <fullName evidence="18">Abelson interactor 2</fullName>
        <shortName evidence="16">Abi-2</shortName>
    </alternativeName>
    <alternativeName>
        <fullName>Abl-binding protein 3</fullName>
        <shortName>AblBP3</shortName>
    </alternativeName>
    <alternativeName>
        <fullName evidence="17">Arg-binding protein 1</fullName>
        <shortName evidence="17">ArgBP1</shortName>
    </alternativeName>
</protein>
<sequence>MAELQMLLEEEIPGGRRALFDSYTNLERVADYCENNYIQSADKQRALEETKAYTTQSLASVAYLINTLANNVLQMLDIQASQLRRMESSINHISQTVDIHKEKVARREIGILTTNKNTSRTHKIIAPANLERPVRYIRKPIDYTILDDIGHGVKWLLRFKVSTQNMKMGGLPRTTPPTQKPPSPPMSGKGTLGRHSPYRTLEPVRPPVVPNDYVPSPTRNMAPSQQSPVRTASVNQRNRTYSSSGSSGGSHPSSRSSSRENSGSGSVGVPIAVPTPSPPSVFPAPAGSAGTPPLPATSASAPAPLVPATVPSSTAPNAAAGGAPNLADGFTSPTPPVVSSTPPTGHPVQFYSMNRPASRHTPPTIGGSLPYRRPPSITSQTSLQNQMNGGPFYSQNPVSDTPPPPPPVEEPVFDESPPPPPPPEDYEEEEAAVVEYSDPYAEEDPPWAPRSYLEKVVAIYDYTKDKEDELSFQEGAIIYVIKKNDDGWYEGVMNGVTGLFPGNYVESIMHYSE</sequence>
<gene>
    <name evidence="15 22" type="primary">ABI2</name>
    <name type="synonym">ARGBPIA</name>
</gene>
<organism>
    <name type="scientific">Homo sapiens</name>
    <name type="common">Human</name>
    <dbReference type="NCBI Taxonomy" id="9606"/>
    <lineage>
        <taxon>Eukaryota</taxon>
        <taxon>Metazoa</taxon>
        <taxon>Chordata</taxon>
        <taxon>Craniata</taxon>
        <taxon>Vertebrata</taxon>
        <taxon>Euteleostomi</taxon>
        <taxon>Mammalia</taxon>
        <taxon>Eutheria</taxon>
        <taxon>Euarchontoglires</taxon>
        <taxon>Primates</taxon>
        <taxon>Haplorrhini</taxon>
        <taxon>Catarrhini</taxon>
        <taxon>Hominidae</taxon>
        <taxon>Homo</taxon>
    </lineage>
</organism>
<keyword id="KW-0002">3D-structure</keyword>
<keyword id="KW-0025">Alternative splicing</keyword>
<keyword id="KW-0965">Cell junction</keyword>
<keyword id="KW-0966">Cell projection</keyword>
<keyword id="KW-0175">Coiled coil</keyword>
<keyword id="KW-0963">Cytoplasm</keyword>
<keyword id="KW-0206">Cytoskeleton</keyword>
<keyword id="KW-0225">Disease variant</keyword>
<keyword id="KW-0945">Host-virus interaction</keyword>
<keyword id="KW-0991">Intellectual disability</keyword>
<keyword id="KW-0524">Neurogenesis</keyword>
<keyword id="KW-0539">Nucleus</keyword>
<keyword id="KW-0597">Phosphoprotein</keyword>
<keyword id="KW-1267">Proteomics identification</keyword>
<keyword id="KW-1185">Reference proteome</keyword>
<keyword id="KW-0728">SH3 domain</keyword>
<proteinExistence type="evidence at protein level"/>
<reference key="1">
    <citation type="journal article" date="1995" name="Genes Dev.">
        <title>Abi-2, a novel SH3-containing protein interacts with the c-Abl tyrosine kinase and modulates c-Abl transforming activity.</title>
        <authorList>
            <person name="Dai Z."/>
            <person name="Pendergast A.M."/>
        </authorList>
    </citation>
    <scope>NUCLEOTIDE SEQUENCE [MRNA] (ISOFORM 3)</scope>
    <scope>FUNCTION</scope>
    <scope>SUBCELLULAR LOCATION</scope>
    <scope>PHOSPHORYLATION</scope>
    <scope>INTERACTION WITH ABL1</scope>
    <scope>TISSUE SPECIFICITY</scope>
    <scope>DOMAIN</scope>
</reference>
<reference key="2">
    <citation type="submission" date="1995-07" db="EMBL/GenBank/DDBJ databases">
        <title>Cloning of a binding substrate of the Abl protein tyrosine kinase.</title>
        <authorList>
            <person name="Ren R."/>
        </authorList>
    </citation>
    <scope>NUCLEOTIDE SEQUENCE [MRNA] (ISOFORM 2)</scope>
</reference>
<reference key="3">
    <citation type="journal article" date="1996" name="Oncogene">
        <title>Identification of ArgBP1, an Arg protein tyrosine kinase binding protein that is the human homologue of a CNS-specific Xenopus gene.</title>
        <authorList>
            <person name="Wang B."/>
            <person name="Mysliwiec T."/>
            <person name="Krainc D."/>
            <person name="Jensen R.A."/>
            <person name="Sonoda G."/>
            <person name="Testa J.R."/>
            <person name="Golemis E.A."/>
            <person name="Kruh G.D."/>
        </authorList>
    </citation>
    <scope>NUCLEOTIDE SEQUENCE [MRNA] (ISOFORM 2)</scope>
    <scope>FUNCTION</scope>
    <scope>SUBCELLULAR LOCATION</scope>
    <scope>INTERACTION WITH ABL2</scope>
    <scope>DOMAIN</scope>
    <source>
        <tissue>Brain</tissue>
    </source>
</reference>
<reference key="4">
    <citation type="submission" date="2003-08" db="EMBL/GenBank/DDBJ databases">
        <title>Cloning of human full-length CDSs in BD Creator(TM) system donor vector.</title>
        <authorList>
            <person name="Kalnine N."/>
            <person name="Chen X."/>
            <person name="Rolfs A."/>
            <person name="Halleck A."/>
            <person name="Hines L."/>
            <person name="Eisenstein S."/>
            <person name="Koundinya M."/>
            <person name="Raphael J."/>
            <person name="Moreira D."/>
            <person name="Kelley T."/>
            <person name="LaBaer J."/>
            <person name="Lin Y."/>
            <person name="Phelan M."/>
            <person name="Farmer A."/>
        </authorList>
    </citation>
    <scope>NUCLEOTIDE SEQUENCE [LARGE SCALE MRNA] (ISOFORM 2)</scope>
</reference>
<reference key="5">
    <citation type="journal article" date="2004" name="Nat. Genet.">
        <title>Complete sequencing and characterization of 21,243 full-length human cDNAs.</title>
        <authorList>
            <person name="Ota T."/>
            <person name="Suzuki Y."/>
            <person name="Nishikawa T."/>
            <person name="Otsuki T."/>
            <person name="Sugiyama T."/>
            <person name="Irie R."/>
            <person name="Wakamatsu A."/>
            <person name="Hayashi K."/>
            <person name="Sato H."/>
            <person name="Nagai K."/>
            <person name="Kimura K."/>
            <person name="Makita H."/>
            <person name="Sekine M."/>
            <person name="Obayashi M."/>
            <person name="Nishi T."/>
            <person name="Shibahara T."/>
            <person name="Tanaka T."/>
            <person name="Ishii S."/>
            <person name="Yamamoto J."/>
            <person name="Saito K."/>
            <person name="Kawai Y."/>
            <person name="Isono Y."/>
            <person name="Nakamura Y."/>
            <person name="Nagahari K."/>
            <person name="Murakami K."/>
            <person name="Yasuda T."/>
            <person name="Iwayanagi T."/>
            <person name="Wagatsuma M."/>
            <person name="Shiratori A."/>
            <person name="Sudo H."/>
            <person name="Hosoiri T."/>
            <person name="Kaku Y."/>
            <person name="Kodaira H."/>
            <person name="Kondo H."/>
            <person name="Sugawara M."/>
            <person name="Takahashi M."/>
            <person name="Kanda K."/>
            <person name="Yokoi T."/>
            <person name="Furuya T."/>
            <person name="Kikkawa E."/>
            <person name="Omura Y."/>
            <person name="Abe K."/>
            <person name="Kamihara K."/>
            <person name="Katsuta N."/>
            <person name="Sato K."/>
            <person name="Tanikawa M."/>
            <person name="Yamazaki M."/>
            <person name="Ninomiya K."/>
            <person name="Ishibashi T."/>
            <person name="Yamashita H."/>
            <person name="Murakawa K."/>
            <person name="Fujimori K."/>
            <person name="Tanai H."/>
            <person name="Kimata M."/>
            <person name="Watanabe M."/>
            <person name="Hiraoka S."/>
            <person name="Chiba Y."/>
            <person name="Ishida S."/>
            <person name="Ono Y."/>
            <person name="Takiguchi S."/>
            <person name="Watanabe S."/>
            <person name="Yosida M."/>
            <person name="Hotuta T."/>
            <person name="Kusano J."/>
            <person name="Kanehori K."/>
            <person name="Takahashi-Fujii A."/>
            <person name="Hara H."/>
            <person name="Tanase T.-O."/>
            <person name="Nomura Y."/>
            <person name="Togiya S."/>
            <person name="Komai F."/>
            <person name="Hara R."/>
            <person name="Takeuchi K."/>
            <person name="Arita M."/>
            <person name="Imose N."/>
            <person name="Musashino K."/>
            <person name="Yuuki H."/>
            <person name="Oshima A."/>
            <person name="Sasaki N."/>
            <person name="Aotsuka S."/>
            <person name="Yoshikawa Y."/>
            <person name="Matsunawa H."/>
            <person name="Ichihara T."/>
            <person name="Shiohata N."/>
            <person name="Sano S."/>
            <person name="Moriya S."/>
            <person name="Momiyama H."/>
            <person name="Satoh N."/>
            <person name="Takami S."/>
            <person name="Terashima Y."/>
            <person name="Suzuki O."/>
            <person name="Nakagawa S."/>
            <person name="Senoh A."/>
            <person name="Mizoguchi H."/>
            <person name="Goto Y."/>
            <person name="Shimizu F."/>
            <person name="Wakebe H."/>
            <person name="Hishigaki H."/>
            <person name="Watanabe T."/>
            <person name="Sugiyama A."/>
            <person name="Takemoto M."/>
            <person name="Kawakami B."/>
            <person name="Yamazaki M."/>
            <person name="Watanabe K."/>
            <person name="Kumagai A."/>
            <person name="Itakura S."/>
            <person name="Fukuzumi Y."/>
            <person name="Fujimori Y."/>
            <person name="Komiyama M."/>
            <person name="Tashiro H."/>
            <person name="Tanigami A."/>
            <person name="Fujiwara T."/>
            <person name="Ono T."/>
            <person name="Yamada K."/>
            <person name="Fujii Y."/>
            <person name="Ozaki K."/>
            <person name="Hirao M."/>
            <person name="Ohmori Y."/>
            <person name="Kawabata A."/>
            <person name="Hikiji T."/>
            <person name="Kobatake N."/>
            <person name="Inagaki H."/>
            <person name="Ikema Y."/>
            <person name="Okamoto S."/>
            <person name="Okitani R."/>
            <person name="Kawakami T."/>
            <person name="Noguchi S."/>
            <person name="Itoh T."/>
            <person name="Shigeta K."/>
            <person name="Senba T."/>
            <person name="Matsumura K."/>
            <person name="Nakajima Y."/>
            <person name="Mizuno T."/>
            <person name="Morinaga M."/>
            <person name="Sasaki M."/>
            <person name="Togashi T."/>
            <person name="Oyama M."/>
            <person name="Hata H."/>
            <person name="Watanabe M."/>
            <person name="Komatsu T."/>
            <person name="Mizushima-Sugano J."/>
            <person name="Satoh T."/>
            <person name="Shirai Y."/>
            <person name="Takahashi Y."/>
            <person name="Nakagawa K."/>
            <person name="Okumura K."/>
            <person name="Nagase T."/>
            <person name="Nomura N."/>
            <person name="Kikuchi H."/>
            <person name="Masuho Y."/>
            <person name="Yamashita R."/>
            <person name="Nakai K."/>
            <person name="Yada T."/>
            <person name="Nakamura Y."/>
            <person name="Ohara O."/>
            <person name="Isogai T."/>
            <person name="Sugano S."/>
        </authorList>
    </citation>
    <scope>NUCLEOTIDE SEQUENCE [LARGE SCALE MRNA] (ISOFORM 4)</scope>
    <source>
        <tissue>Brain</tissue>
    </source>
</reference>
<reference key="6">
    <citation type="journal article" date="2004" name="Genome Res.">
        <title>The status, quality, and expansion of the NIH full-length cDNA project: the Mammalian Gene Collection (MGC).</title>
        <authorList>
            <consortium name="The MGC Project Team"/>
        </authorList>
    </citation>
    <scope>NUCLEOTIDE SEQUENCE [LARGE SCALE MRNA] (ISOFORM 2)</scope>
    <source>
        <tissue>Placenta</tissue>
    </source>
</reference>
<reference key="7">
    <citation type="journal article" date="1999" name="Oncogene">
        <title>Drosophila abelson interacting protein (dAbi) is a positive regulator of abelson tyrosine kinase activity.</title>
        <authorList>
            <person name="Juang J.L."/>
            <person name="Hoffmann F.M."/>
        </authorList>
    </citation>
    <scope>FUNCTION</scope>
</reference>
<reference key="8">
    <citation type="journal article" date="2001" name="Curr. Biol.">
        <title>The Abl interactor proteins localize to sites of actin polymerization at the tips of lamellipodia and filopodia.</title>
        <authorList>
            <person name="Stradal T.E.B."/>
            <person name="Courtney K.D."/>
            <person name="Rottner K."/>
            <person name="Hahne P."/>
            <person name="Small J.V."/>
            <person name="Pendergast A.M."/>
        </authorList>
    </citation>
    <scope>SUBCELLULAR LOCATION</scope>
</reference>
<reference key="9">
    <citation type="journal article" date="2004" name="Mol. Cell. Biol.">
        <title>ABI2-deficient mice exhibit defective cell migration, aberrant dendritic spine morphogenesis, and deficits in learning and memory.</title>
        <authorList>
            <person name="Grove M."/>
            <person name="Demyanenko G."/>
            <person name="Echarri A."/>
            <person name="Zipfel P.A."/>
            <person name="Quiroz M.E."/>
            <person name="Rodriguiz R.M."/>
            <person name="Playford M."/>
            <person name="Martensen S.A."/>
            <person name="Robinson M.R."/>
            <person name="Wetsel W.C."/>
            <person name="Maness P.F."/>
            <person name="Pendergast A.M."/>
        </authorList>
    </citation>
    <scope>SUBCELLULAR LOCATION</scope>
    <scope>FUNCTION</scope>
</reference>
<reference key="10">
    <citation type="journal article" date="2008" name="Proc. Natl. Acad. Sci. U.S.A.">
        <title>A quantitative atlas of mitotic phosphorylation.</title>
        <authorList>
            <person name="Dephoure N."/>
            <person name="Zhou C."/>
            <person name="Villen J."/>
            <person name="Beausoleil S.A."/>
            <person name="Bakalarski C.E."/>
            <person name="Elledge S.J."/>
            <person name="Gygi S.P."/>
        </authorList>
    </citation>
    <scope>PHOSPHORYLATION [LARGE SCALE ANALYSIS] AT SER-227</scope>
    <scope>IDENTIFICATION BY MASS SPECTROMETRY [LARGE SCALE ANALYSIS]</scope>
    <source>
        <tissue>Cervix carcinoma</tissue>
    </source>
</reference>
<reference key="11">
    <citation type="journal article" date="2010" name="Sci. Signal.">
        <title>Quantitative phosphoproteomics reveals widespread full phosphorylation site occupancy during mitosis.</title>
        <authorList>
            <person name="Olsen J.V."/>
            <person name="Vermeulen M."/>
            <person name="Santamaria A."/>
            <person name="Kumar C."/>
            <person name="Miller M.L."/>
            <person name="Jensen L.J."/>
            <person name="Gnad F."/>
            <person name="Cox J."/>
            <person name="Jensen T.S."/>
            <person name="Nigg E.A."/>
            <person name="Brunak S."/>
            <person name="Mann M."/>
        </authorList>
    </citation>
    <scope>PHOSPHORYLATION [LARGE SCALE ANALYSIS] AT SER-227 AND SER-368</scope>
    <scope>IDENTIFICATION BY MASS SPECTROMETRY [LARGE SCALE ANALYSIS]</scope>
    <source>
        <tissue>Cervix carcinoma</tissue>
    </source>
</reference>
<reference key="12">
    <citation type="journal article" date="2011" name="BMC Syst. Biol.">
        <title>Initial characterization of the human central proteome.</title>
        <authorList>
            <person name="Burkard T.R."/>
            <person name="Planyavsky M."/>
            <person name="Kaupe I."/>
            <person name="Breitwieser F.P."/>
            <person name="Buerckstuemmer T."/>
            <person name="Bennett K.L."/>
            <person name="Superti-Furga G."/>
            <person name="Colinge J."/>
        </authorList>
    </citation>
    <scope>IDENTIFICATION BY MASS SPECTROMETRY [LARGE SCALE ANALYSIS]</scope>
</reference>
<reference key="13">
    <citation type="journal article" date="2011" name="Sci. Signal.">
        <title>System-wide temporal characterization of the proteome and phosphoproteome of human embryonic stem cell differentiation.</title>
        <authorList>
            <person name="Rigbolt K.T."/>
            <person name="Prokhorova T.A."/>
            <person name="Akimov V."/>
            <person name="Henningsen J."/>
            <person name="Johansen P.T."/>
            <person name="Kratchmarova I."/>
            <person name="Kassem M."/>
            <person name="Mann M."/>
            <person name="Olsen J.V."/>
            <person name="Blagoev B."/>
        </authorList>
    </citation>
    <scope>PHOSPHORYLATION [LARGE SCALE ANALYSIS] AT SER-227</scope>
    <scope>IDENTIFICATION BY MASS SPECTROMETRY [LARGE SCALE ANALYSIS]</scope>
</reference>
<reference key="14">
    <citation type="journal article" date="2013" name="J. Proteome Res.">
        <title>Toward a comprehensive characterization of a human cancer cell phosphoproteome.</title>
        <authorList>
            <person name="Zhou H."/>
            <person name="Di Palma S."/>
            <person name="Preisinger C."/>
            <person name="Peng M."/>
            <person name="Polat A.N."/>
            <person name="Heck A.J."/>
            <person name="Mohammed S."/>
        </authorList>
    </citation>
    <scope>PHOSPHORYLATION [LARGE SCALE ANALYSIS] AT SER-183; SER-227 AND SER-368</scope>
    <scope>IDENTIFICATION BY MASS SPECTROMETRY [LARGE SCALE ANALYSIS]</scope>
    <source>
        <tissue>Cervix carcinoma</tissue>
    </source>
</reference>
<reference key="15">
    <citation type="journal article" date="2014" name="Cell Host Microbe">
        <title>HCMV pUL135 remodels the actin cytoskeleton to impair immune recognition of infected cells.</title>
        <authorList>
            <person name="Stanton R.J."/>
            <person name="Prod'homme V."/>
            <person name="Purbhoo M.A."/>
            <person name="Moore M."/>
            <person name="Aicheler R.J."/>
            <person name="Heinzmann M."/>
            <person name="Bailer S.M."/>
            <person name="Haas J."/>
            <person name="Antrobus R."/>
            <person name="Weekes M.P."/>
            <person name="Lehner P.J."/>
            <person name="Vojtesek B."/>
            <person name="Miners K.L."/>
            <person name="Man S."/>
            <person name="Wilkie G.S."/>
            <person name="Davison A.J."/>
            <person name="Wang E.C."/>
            <person name="Tomasec P."/>
            <person name="Wilkinson G.W."/>
        </authorList>
    </citation>
    <scope>INTERACTION WITH HUMAN CYTOMEGALOVIRUS PROTEIN UL135 (MICROBIAL INFECTION)</scope>
</reference>
<reference key="16">
    <citation type="submission" date="2008-02" db="PDB data bank">
        <title>Solution structure of the SH3 domain of Abl interactor 2 (Abelson interactor 2).</title>
        <authorList>
            <consortium name="RIKEN structural genomics initiative (RSGI)"/>
        </authorList>
    </citation>
    <scope>STRUCTURE BY NMR OF 444-508</scope>
</reference>
<reference key="17">
    <citation type="journal article" date="2010" name="Nature">
        <title>Structure and control of the actin regulatory WAVE complex.</title>
        <authorList>
            <person name="Chen Z."/>
            <person name="Borek D."/>
            <person name="Padrick S.B."/>
            <person name="Gomez T.S."/>
            <person name="Metlagel Z."/>
            <person name="Ismail A.M."/>
            <person name="Umetani J."/>
            <person name="Billadeau D.D."/>
            <person name="Otwinowski Z."/>
            <person name="Rosen M.K."/>
        </authorList>
    </citation>
    <scope>X-RAY CRYSTALLOGRAPHY (2.29 ANGSTROMS) OF 1-164</scope>
    <scope>SUBUNIT</scope>
    <scope>FUNCTION</scope>
</reference>
<reference key="18">
    <citation type="journal article" date="2018" name="Mol. Psychiatry">
        <title>Mapping autosomal recessive intellectual disability: combined microarray and exome sequencing identifies 26 novel candidate genes in 192 consanguineous families.</title>
        <authorList>
            <person name="Harripaul R."/>
            <person name="Vasli N."/>
            <person name="Mikhailov A."/>
            <person name="Rafiq M.A."/>
            <person name="Mittal K."/>
            <person name="Windpassinger C."/>
            <person name="Sheikh T.I."/>
            <person name="Noor A."/>
            <person name="Mahmood H."/>
            <person name="Downey S."/>
            <person name="Johnson M."/>
            <person name="Vleuten K."/>
            <person name="Bell L."/>
            <person name="Ilyas M."/>
            <person name="Khan F.S."/>
            <person name="Khan V."/>
            <person name="Moradi M."/>
            <person name="Ayaz M."/>
            <person name="Naeem F."/>
            <person name="Heidari A."/>
            <person name="Ahmed I."/>
            <person name="Ghadami S."/>
            <person name="Agha Z."/>
            <person name="Zeinali S."/>
            <person name="Qamar R."/>
            <person name="Mozhdehipanah H."/>
            <person name="John P."/>
            <person name="Mir A."/>
            <person name="Ansar M."/>
            <person name="French L."/>
            <person name="Ayub M."/>
            <person name="Vincent J.B."/>
        </authorList>
    </citation>
    <scope>VARIANT 132-ARG--GLU-513 DEL</scope>
    <scope>INVOLVEMENT IN INTELLECTUAL DISABILITY</scope>
</reference>
<evidence type="ECO:0000250" key="1">
    <source>
        <dbReference type="UniProtKB" id="P62484"/>
    </source>
</evidence>
<evidence type="ECO:0000255" key="2">
    <source>
        <dbReference type="PROSITE-ProRule" id="PRU00192"/>
    </source>
</evidence>
<evidence type="ECO:0000255" key="3">
    <source>
        <dbReference type="PROSITE-ProRule" id="PRU00202"/>
    </source>
</evidence>
<evidence type="ECO:0000256" key="4">
    <source>
        <dbReference type="SAM" id="MobiDB-lite"/>
    </source>
</evidence>
<evidence type="ECO:0000269" key="5">
    <source>
    </source>
</evidence>
<evidence type="ECO:0000269" key="6">
    <source>
    </source>
</evidence>
<evidence type="ECO:0000269" key="7">
    <source>
    </source>
</evidence>
<evidence type="ECO:0000269" key="8">
    <source>
    </source>
</evidence>
<evidence type="ECO:0000269" key="9">
    <source>
    </source>
</evidence>
<evidence type="ECO:0000269" key="10">
    <source>
    </source>
</evidence>
<evidence type="ECO:0000269" key="11">
    <source>
    </source>
</evidence>
<evidence type="ECO:0000269" key="12">
    <source>
    </source>
</evidence>
<evidence type="ECO:0000303" key="13">
    <source>
    </source>
</evidence>
<evidence type="ECO:0000303" key="14">
    <source>
    </source>
</evidence>
<evidence type="ECO:0000303" key="15">
    <source>
    </source>
</evidence>
<evidence type="ECO:0000303" key="16">
    <source>
    </source>
</evidence>
<evidence type="ECO:0000303" key="17">
    <source>
    </source>
</evidence>
<evidence type="ECO:0000303" key="18">
    <source ref="16"/>
</evidence>
<evidence type="ECO:0000303" key="19">
    <source ref="2"/>
</evidence>
<evidence type="ECO:0000303" key="20">
    <source ref="4"/>
</evidence>
<evidence type="ECO:0000305" key="21"/>
<evidence type="ECO:0000312" key="22">
    <source>
        <dbReference type="HGNC" id="HGNC:24011"/>
    </source>
</evidence>
<evidence type="ECO:0007744" key="23">
    <source>
    </source>
</evidence>
<evidence type="ECO:0007744" key="24">
    <source>
    </source>
</evidence>
<evidence type="ECO:0007744" key="25">
    <source>
    </source>
</evidence>
<evidence type="ECO:0007744" key="26">
    <source>
    </source>
</evidence>
<evidence type="ECO:0007829" key="27">
    <source>
        <dbReference type="PDB" id="2ED0"/>
    </source>
</evidence>
<evidence type="ECO:0007829" key="28">
    <source>
        <dbReference type="PDB" id="3P8C"/>
    </source>
</evidence>
<comment type="function">
    <text evidence="1 5 7 8 11 12">Regulator of actin cytoskeleton dynamics underlying cell motility and adhesion. Functions as a component of the WAVE complex, which activates actin nucleating machinery Arp2/3 to drive lamellipodia formation (PubMed:21107423). Acts as a regulator and substrate of nonreceptor tyrosine kinases ABL1 and ABL2 involved in processes linked to cell growth and differentiation. Positively regulates ABL1-mediated phosphorylation of ENAH, which is required for proper polymerization of nucleated actin filaments at the leading edge (PubMed:10498863, PubMed:7590236, PubMed:8649853). Contributes to the regulation of actin assembly at the tips of neuron projections. In particular, controls dendritic spine morphogenesis and may promote dendritic spine specification toward large mushroom-type spines known as repositories of memory in the brain (By similarity). In hippocampal neurons, may mediate actin-dependent BDNF-NTRK2 early endocytic trafficking that triggers dendrite outgrowth (By similarity). Participates in ocular lens morphogenesis, likely by regulating lamellipodia-driven adherens junction formation at the epithelial cell-secondary lens fiber interface (By similarity). Also required for nascent adherens junction assembly in epithelial cells (PubMed:15572692).</text>
</comment>
<comment type="subunit">
    <text evidence="8 11 12">Component of the WAVE complex composed of ABI2, CYFIP1 or CYFIP2, BRK1, NCKAP1 and WASF1/WAVE1. Within the complex, a heterodimer containing NCKAP1 and CYFIP1 interacts with a heterotrimer formed by WAVE1, ABI2 and BRK1. CYFIP2 binds to activated RAC1 which causes the complex to dissociate, releasing activated WASF1 (PubMed:21107423). Interacts (via SH3 domain) with ABL1 and ABL2 (PubMed:7590236, PubMed:8649853).</text>
</comment>
<comment type="subunit">
    <text evidence="9">(Microbial infection) Interacts with human cytomegalovirus UL135.</text>
</comment>
<comment type="interaction">
    <interactant intactId="EBI-743598">
        <id>Q9NYB9</id>
    </interactant>
    <interactant intactId="EBI-743598">
        <id>Q9NYB9</id>
        <label>ABI2</label>
    </interactant>
    <organismsDiffer>false</organismsDiffer>
    <experiments>3</experiments>
</comment>
<comment type="interaction">
    <interactant intactId="EBI-743598">
        <id>Q9NYB9</id>
    </interactant>
    <interactant intactId="EBI-375543">
        <id>P00519</id>
        <label>ABL1</label>
    </interactant>
    <organismsDiffer>false</organismsDiffer>
    <experiments>3</experiments>
</comment>
<comment type="interaction">
    <interactant intactId="EBI-743598">
        <id>Q9NYB9</id>
    </interactant>
    <interactant intactId="EBI-308663">
        <id>A7KAX9</id>
        <label>ARHGAP32</label>
    </interactant>
    <organismsDiffer>false</organismsDiffer>
    <experiments>4</experiments>
</comment>
<comment type="interaction">
    <interactant intactId="EBI-743598">
        <id>Q9NYB9</id>
    </interactant>
    <interactant intactId="EBI-742909">
        <id>Q9H6L4</id>
        <label>ARMC7</label>
    </interactant>
    <organismsDiffer>false</organismsDiffer>
    <experiments>4</experiments>
</comment>
<comment type="interaction">
    <interactant intactId="EBI-743598">
        <id>Q9NYB9</id>
    </interactant>
    <interactant intactId="EBI-465781">
        <id>Q9UL45</id>
        <label>BLOC1S6</label>
    </interactant>
    <organismsDiffer>false</organismsDiffer>
    <experiments>5</experiments>
</comment>
<comment type="interaction">
    <interactant intactId="EBI-743598">
        <id>Q9NYB9</id>
    </interactant>
    <interactant intactId="EBI-10171570">
        <id>Q68D86</id>
        <label>CCDC102B</label>
    </interactant>
    <organismsDiffer>false</organismsDiffer>
    <experiments>5</experiments>
</comment>
<comment type="interaction">
    <interactant intactId="EBI-743598">
        <id>Q9NYB9</id>
    </interactant>
    <interactant intactId="EBI-949834">
        <id>Q8TD31</id>
        <label>CCHCR1</label>
    </interactant>
    <organismsDiffer>false</organismsDiffer>
    <experiments>3</experiments>
</comment>
<comment type="interaction">
    <interactant intactId="EBI-743598">
        <id>Q9NYB9</id>
    </interactant>
    <interactant intactId="EBI-10175300">
        <id>Q8TD31-3</id>
        <label>CCHCR1</label>
    </interactant>
    <organismsDiffer>false</organismsDiffer>
    <experiments>3</experiments>
</comment>
<comment type="interaction">
    <interactant intactId="EBI-743598">
        <id>Q9NYB9</id>
    </interactant>
    <interactant intactId="EBI-748171">
        <id>O43186</id>
        <label>CRX</label>
    </interactant>
    <organismsDiffer>false</organismsDiffer>
    <experiments>5</experiments>
</comment>
<comment type="interaction">
    <interactant intactId="EBI-743598">
        <id>Q9NYB9</id>
    </interactant>
    <interactant intactId="EBI-740402">
        <id>O60941</id>
        <label>DTNB</label>
    </interactant>
    <organismsDiffer>false</organismsDiffer>
    <experiments>6</experiments>
</comment>
<comment type="interaction">
    <interactant intactId="EBI-743598">
        <id>Q9NYB9</id>
    </interactant>
    <interactant intactId="EBI-718488">
        <id>O43281</id>
        <label>EFS</label>
    </interactant>
    <organismsDiffer>false</organismsDiffer>
    <experiments>6</experiments>
</comment>
<comment type="interaction">
    <interactant intactId="EBI-743598">
        <id>Q9NYB9</id>
    </interactant>
    <interactant intactId="EBI-1175354">
        <id>Q9H6Z9</id>
        <label>EGLN3</label>
    </interactant>
    <organismsDiffer>false</organismsDiffer>
    <experiments>3</experiments>
</comment>
<comment type="interaction">
    <interactant intactId="EBI-743598">
        <id>Q9NYB9</id>
    </interactant>
    <interactant intactId="EBI-10184995">
        <id>Q6IB98</id>
        <label>EIF3S3</label>
    </interactant>
    <organismsDiffer>false</organismsDiffer>
    <experiments>3</experiments>
</comment>
<comment type="interaction">
    <interactant intactId="EBI-743598">
        <id>Q9NYB9</id>
    </interactant>
    <interactant intactId="EBI-746252">
        <id>Q96CN9</id>
        <label>GCC1</label>
    </interactant>
    <organismsDiffer>false</organismsDiffer>
    <experiments>4</experiments>
</comment>
<comment type="interaction">
    <interactant intactId="EBI-743598">
        <id>Q9NYB9</id>
    </interactant>
    <interactant intactId="EBI-740220">
        <id>O14964</id>
        <label>HGS</label>
    </interactant>
    <organismsDiffer>false</organismsDiffer>
    <experiments>5</experiments>
</comment>
<comment type="interaction">
    <interactant intactId="EBI-743598">
        <id>Q9NYB9</id>
    </interactant>
    <interactant intactId="EBI-304185">
        <id>P61978</id>
        <label>HNRNPK</label>
    </interactant>
    <organismsDiffer>false</organismsDiffer>
    <experiments>6</experiments>
</comment>
<comment type="interaction">
    <interactant intactId="EBI-743598">
        <id>Q9NYB9</id>
    </interactant>
    <interactant intactId="EBI-748420">
        <id>Q9NSC5</id>
        <label>HOMER3</label>
    </interactant>
    <organismsDiffer>false</organismsDiffer>
    <experiments>8</experiments>
</comment>
<comment type="interaction">
    <interactant intactId="EBI-743598">
        <id>Q9NYB9</id>
    </interactant>
    <interactant intactId="EBI-744203">
        <id>Q8IY31</id>
        <label>IFT20</label>
    </interactant>
    <organismsDiffer>false</organismsDiffer>
    <experiments>6</experiments>
</comment>
<comment type="interaction">
    <interactant intactId="EBI-743598">
        <id>Q9NYB9</id>
    </interactant>
    <interactant intactId="EBI-8638439">
        <id>Q8IYA8</id>
        <label>IHO1</label>
    </interactant>
    <organismsDiffer>false</organismsDiffer>
    <experiments>6</experiments>
</comment>
<comment type="interaction">
    <interactant intactId="EBI-743598">
        <id>Q9NYB9</id>
    </interactant>
    <interactant intactId="EBI-10188326">
        <id>Q5T5P2-6</id>
        <label>KIAA1217</label>
    </interactant>
    <organismsDiffer>false</organismsDiffer>
    <experiments>3</experiments>
</comment>
<comment type="interaction">
    <interactant intactId="EBI-743598">
        <id>Q9NYB9</id>
    </interactant>
    <interactant intactId="EBI-2125614">
        <id>Q9BVG8</id>
        <label>KIFC3</label>
    </interactant>
    <organismsDiffer>false</organismsDiffer>
    <experiments>5</experiments>
</comment>
<comment type="interaction">
    <interactant intactId="EBI-743598">
        <id>Q9NYB9</id>
    </interactant>
    <interactant intactId="EBI-10171552">
        <id>A1A4E9</id>
        <label>KRT13</label>
    </interactant>
    <organismsDiffer>false</organismsDiffer>
    <experiments>3</experiments>
</comment>
<comment type="interaction">
    <interactant intactId="EBI-743598">
        <id>Q9NYB9</id>
    </interactant>
    <interactant intactId="EBI-739566">
        <id>P19012</id>
        <label>KRT15</label>
    </interactant>
    <organismsDiffer>false</organismsDiffer>
    <experiments>6</experiments>
</comment>
<comment type="interaction">
    <interactant intactId="EBI-743598">
        <id>Q9NYB9</id>
    </interactant>
    <interactant intactId="EBI-742756">
        <id>P08727</id>
        <label>KRT19</label>
    </interactant>
    <organismsDiffer>false</organismsDiffer>
    <experiments>3</experiments>
</comment>
<comment type="interaction">
    <interactant intactId="EBI-743598">
        <id>Q9NYB9</id>
    </interactant>
    <interactant intactId="EBI-742094">
        <id>P35900</id>
        <label>KRT20</label>
    </interactant>
    <organismsDiffer>false</organismsDiffer>
    <experiments>3</experiments>
</comment>
<comment type="interaction">
    <interactant intactId="EBI-743598">
        <id>Q9NYB9</id>
    </interactant>
    <interactant intactId="EBI-948001">
        <id>Q15323</id>
        <label>KRT31</label>
    </interactant>
    <organismsDiffer>false</organismsDiffer>
    <experiments>5</experiments>
</comment>
<comment type="interaction">
    <interactant intactId="EBI-743598">
        <id>Q9NYB9</id>
    </interactant>
    <interactant intactId="EBI-1049638">
        <id>Q14525</id>
        <label>KRT33B</label>
    </interactant>
    <organismsDiffer>false</organismsDiffer>
    <experiments>3</experiments>
</comment>
<comment type="interaction">
    <interactant intactId="EBI-743598">
        <id>Q9NYB9</id>
    </interactant>
    <interactant intactId="EBI-739696">
        <id>P25791</id>
        <label>LMO2</label>
    </interactant>
    <organismsDiffer>false</organismsDiffer>
    <experiments>5</experiments>
</comment>
<comment type="interaction">
    <interactant intactId="EBI-743598">
        <id>Q9NYB9</id>
    </interactant>
    <interactant intactId="EBI-748896">
        <id>Q96HT8</id>
        <label>MRFAP1L1</label>
    </interactant>
    <organismsDiffer>false</organismsDiffer>
    <experiments>7</experiments>
</comment>
<comment type="interaction">
    <interactant intactId="EBI-743598">
        <id>Q9NYB9</id>
    </interactant>
    <interactant intactId="EBI-713619">
        <id>Q9H9J2</id>
        <label>MRPL44</label>
    </interactant>
    <organismsDiffer>false</organismsDiffer>
    <experiments>3</experiments>
</comment>
<comment type="interaction">
    <interactant intactId="EBI-743598">
        <id>Q9NYB9</id>
    </interactant>
    <interactant intactId="EBI-713635">
        <id>O43639</id>
        <label>NCK2</label>
    </interactant>
    <organismsDiffer>false</organismsDiffer>
    <experiments>8</experiments>
</comment>
<comment type="interaction">
    <interactant intactId="EBI-743598">
        <id>Q9NYB9</id>
    </interactant>
    <interactant intactId="EBI-347978">
        <id>P37198</id>
        <label>NUP62</label>
    </interactant>
    <organismsDiffer>false</organismsDiffer>
    <experiments>6</experiments>
</comment>
<comment type="interaction">
    <interactant intactId="EBI-743598">
        <id>Q9NYB9</id>
    </interactant>
    <interactant intactId="EBI-741421">
        <id>Q15154</id>
        <label>PCM1</label>
    </interactant>
    <organismsDiffer>false</organismsDiffer>
    <experiments>3</experiments>
</comment>
<comment type="interaction">
    <interactant intactId="EBI-743598">
        <id>Q9NYB9</id>
    </interactant>
    <interactant intactId="EBI-714158">
        <id>Q13526</id>
        <label>PIN1</label>
    </interactant>
    <organismsDiffer>false</organismsDiffer>
    <experiments>5</experiments>
</comment>
<comment type="interaction">
    <interactant intactId="EBI-743598">
        <id>Q9NYB9</id>
    </interactant>
    <interactant intactId="EBI-5544229">
        <id>P30405</id>
        <label>PPIF</label>
    </interactant>
    <organismsDiffer>false</organismsDiffer>
    <experiments>4</experiments>
</comment>
<comment type="interaction">
    <interactant intactId="EBI-743598">
        <id>Q9NYB9</id>
    </interactant>
    <interactant intactId="EBI-2860740">
        <id>Q96QH2</id>
        <label>PRAM1</label>
    </interactant>
    <organismsDiffer>false</organismsDiffer>
    <experiments>3</experiments>
</comment>
<comment type="interaction">
    <interactant intactId="EBI-743598">
        <id>Q9NYB9</id>
    </interactant>
    <interactant intactId="EBI-1181405">
        <id>Q13131</id>
        <label>PRKAA1</label>
    </interactant>
    <organismsDiffer>false</organismsDiffer>
    <experiments>5</experiments>
</comment>
<comment type="interaction">
    <interactant intactId="EBI-743598">
        <id>Q9NYB9</id>
    </interactant>
    <interactant intactId="EBI-1383852">
        <id>P54646</id>
        <label>PRKAA2</label>
    </interactant>
    <organismsDiffer>false</organismsDiffer>
    <experiments>5</experiments>
</comment>
<comment type="interaction">
    <interactant intactId="EBI-743598">
        <id>Q9NYB9</id>
    </interactant>
    <interactant intactId="EBI-5564642">
        <id>Q569H4</id>
        <label>PRR16</label>
    </interactant>
    <organismsDiffer>false</organismsDiffer>
    <experiments>4</experiments>
</comment>
<comment type="interaction">
    <interactant intactId="EBI-743598">
        <id>Q9NYB9</id>
    </interactant>
    <interactant intactId="EBI-727004">
        <id>O00560</id>
        <label>SDCBP</label>
    </interactant>
    <organismsDiffer>false</organismsDiffer>
    <experiments>5</experiments>
</comment>
<comment type="interaction">
    <interactant intactId="EBI-743598">
        <id>Q9NYB9</id>
    </interactant>
    <interactant intactId="EBI-373258">
        <id>O75886</id>
        <label>STAM2</label>
    </interactant>
    <organismsDiffer>false</organismsDiffer>
    <experiments>5</experiments>
</comment>
<comment type="interaction">
    <interactant intactId="EBI-743598">
        <id>Q9NYB9</id>
    </interactant>
    <interactant intactId="EBI-1105213">
        <id>Q9UBB9</id>
        <label>TFIP11</label>
    </interactant>
    <organismsDiffer>false</organismsDiffer>
    <experiments>6</experiments>
</comment>
<comment type="interaction">
    <interactant intactId="EBI-743598">
        <id>Q9NYB9</id>
    </interactant>
    <interactant intactId="EBI-717810">
        <id>Q08117</id>
        <label>TLE5</label>
    </interactant>
    <organismsDiffer>false</organismsDiffer>
    <experiments>5</experiments>
</comment>
<comment type="interaction">
    <interactant intactId="EBI-743598">
        <id>Q9NYB9</id>
    </interactant>
    <interactant intactId="EBI-742790">
        <id>Q13049</id>
        <label>TRIM32</label>
    </interactant>
    <organismsDiffer>false</organismsDiffer>
    <experiments>8</experiments>
</comment>
<comment type="interaction">
    <interactant intactId="EBI-743598">
        <id>Q9NYB9</id>
    </interactant>
    <interactant intactId="EBI-742327">
        <id>Q15654</id>
        <label>TRIP6</label>
    </interactant>
    <organismsDiffer>false</organismsDiffer>
    <experiments>5</experiments>
</comment>
<comment type="interaction">
    <interactant intactId="EBI-743598">
        <id>Q9NYB9</id>
    </interactant>
    <interactant intactId="EBI-10244997">
        <id>Q5ST30-4</id>
        <label>VARS2</label>
    </interactant>
    <organismsDiffer>false</organismsDiffer>
    <experiments>3</experiments>
</comment>
<comment type="interaction">
    <interactant intactId="EBI-743598">
        <id>Q9NYB9</id>
    </interactant>
    <interactant intactId="EBI-748201">
        <id>P50552</id>
        <label>VASP</label>
    </interactant>
    <organismsDiffer>false</organismsDiffer>
    <experiments>5</experiments>
</comment>
<comment type="interaction">
    <interactant intactId="EBI-743598">
        <id>Q9NYB9</id>
    </interactant>
    <interactant intactId="EBI-716775">
        <id>P18206</id>
        <label>VCL</label>
    </interactant>
    <organismsDiffer>false</organismsDiffer>
    <experiments>3</experiments>
</comment>
<comment type="interaction">
    <interactant intactId="EBI-743598">
        <id>Q9NYB9</id>
    </interactant>
    <interactant intactId="EBI-712969">
        <id>Q9Y3C0</id>
        <label>WASHC3</label>
    </interactant>
    <organismsDiffer>false</organismsDiffer>
    <experiments>4</experiments>
</comment>
<comment type="interaction">
    <interactant intactId="EBI-743598">
        <id>Q9NYB9</id>
    </interactant>
    <interactant intactId="EBI-346356">
        <id>O43516</id>
        <label>WIPF1</label>
    </interactant>
    <organismsDiffer>false</organismsDiffer>
    <experiments>4</experiments>
</comment>
<comment type="interaction">
    <interactant intactId="EBI-743598">
        <id>Q9NYB9</id>
    </interactant>
    <interactant intactId="EBI-7049475">
        <id>Q8VHK2</id>
        <label>Caskin1</label>
    </interactant>
    <organismsDiffer>true</organismsDiffer>
    <experiments>3</experiments>
</comment>
<comment type="interaction">
    <interactant intactId="EBI-11096309">
        <id>Q9NYB9-2</id>
    </interactant>
    <interactant intactId="EBI-11743294">
        <id>Q8IZP0-5</id>
        <label>ABI1</label>
    </interactant>
    <organismsDiffer>false</organismsDiffer>
    <experiments>3</experiments>
</comment>
<comment type="interaction">
    <interactant intactId="EBI-11096309">
        <id>Q9NYB9-2</id>
    </interactant>
    <interactant intactId="EBI-11096309">
        <id>Q9NYB9-2</id>
        <label>ABI2</label>
    </interactant>
    <organismsDiffer>false</organismsDiffer>
    <experiments>3</experiments>
</comment>
<comment type="interaction">
    <interactant intactId="EBI-11096309">
        <id>Q9NYB9-2</id>
    </interactant>
    <interactant intactId="EBI-742038">
        <id>Q9P2A4</id>
        <label>ABI3</label>
    </interactant>
    <organismsDiffer>false</organismsDiffer>
    <experiments>5</experiments>
</comment>
<comment type="interaction">
    <interactant intactId="EBI-11096309">
        <id>Q9NYB9-2</id>
    </interactant>
    <interactant intactId="EBI-10693977">
        <id>P42684-3</id>
        <label>ABL2</label>
    </interactant>
    <organismsDiffer>false</organismsDiffer>
    <experiments>3</experiments>
</comment>
<comment type="interaction">
    <interactant intactId="EBI-11096309">
        <id>Q9NYB9-2</id>
    </interactant>
    <interactant intactId="EBI-11961672">
        <id>O94929-2</id>
        <label>ABLIM3</label>
    </interactant>
    <organismsDiffer>false</organismsDiffer>
    <experiments>3</experiments>
</comment>
<comment type="interaction">
    <interactant intactId="EBI-11096309">
        <id>Q9NYB9-2</id>
    </interactant>
    <interactant intactId="EBI-11976299">
        <id>Q5BKX5-3</id>
        <label>ACTMAP</label>
    </interactant>
    <organismsDiffer>false</organismsDiffer>
    <experiments>5</experiments>
</comment>
<comment type="interaction">
    <interactant intactId="EBI-11096309">
        <id>Q9NYB9-2</id>
    </interactant>
    <interactant intactId="EBI-8643161">
        <id>Q9NX04</id>
        <label>AIRIM</label>
    </interactant>
    <organismsDiffer>false</organismsDiffer>
    <experiments>3</experiments>
</comment>
<comment type="interaction">
    <interactant intactId="EBI-11096309">
        <id>Q9NYB9-2</id>
    </interactant>
    <interactant intactId="EBI-357530">
        <id>Q9ULX6</id>
        <label>AKAP8L</label>
    </interactant>
    <organismsDiffer>false</organismsDiffer>
    <experiments>3</experiments>
</comment>
<comment type="interaction">
    <interactant intactId="EBI-11096309">
        <id>Q9NYB9-2</id>
    </interactant>
    <interactant intactId="EBI-11745576">
        <id>Q6PJH3</id>
        <label>AKAP9</label>
    </interactant>
    <organismsDiffer>false</organismsDiffer>
    <experiments>3</experiments>
</comment>
<comment type="interaction">
    <interactant intactId="EBI-11096309">
        <id>Q9NYB9-2</id>
    </interactant>
    <interactant intactId="EBI-14493093">
        <id>Q3KP44</id>
        <label>ANKRD55</label>
    </interactant>
    <organismsDiffer>false</organismsDiffer>
    <experiments>3</experiments>
</comment>
<comment type="interaction">
    <interactant intactId="EBI-11096309">
        <id>Q9NYB9-2</id>
    </interactant>
    <interactant intactId="EBI-11954519">
        <id>Q49AR9</id>
        <label>ANKS1A</label>
    </interactant>
    <organismsDiffer>false</organismsDiffer>
    <experiments>3</experiments>
</comment>
<comment type="interaction">
    <interactant intactId="EBI-11096309">
        <id>Q9NYB9-2</id>
    </interactant>
    <interactant intactId="EBI-745689">
        <id>Q7L5A3</id>
        <label>ATOSB</label>
    </interactant>
    <organismsDiffer>false</organismsDiffer>
    <experiments>3</experiments>
</comment>
<comment type="interaction">
    <interactant intactId="EBI-11096309">
        <id>Q9NYB9-2</id>
    </interactant>
    <interactant intactId="EBI-12811889">
        <id>Q9Y6H3</id>
        <label>ATP23</label>
    </interactant>
    <organismsDiffer>false</organismsDiffer>
    <experiments>3</experiments>
</comment>
<comment type="interaction">
    <interactant intactId="EBI-11096309">
        <id>Q9NYB9-2</id>
    </interactant>
    <interactant intactId="EBI-2949658">
        <id>O95429</id>
        <label>BAG4</label>
    </interactant>
    <organismsDiffer>false</organismsDiffer>
    <experiments>5</experiments>
</comment>
<comment type="interaction">
    <interactant intactId="EBI-11096309">
        <id>Q9NYB9-2</id>
    </interactant>
    <interactant intactId="EBI-2653038">
        <id>Q9NQY0</id>
        <label>BIN3</label>
    </interactant>
    <organismsDiffer>false</organismsDiffer>
    <experiments>7</experiments>
</comment>
<comment type="interaction">
    <interactant intactId="EBI-11096309">
        <id>Q9NYB9-2</id>
    </interactant>
    <interactant intactId="EBI-465861">
        <id>Q8TDH9</id>
        <label>BLOC1S5</label>
    </interactant>
    <organismsDiffer>false</organismsDiffer>
    <experiments>3</experiments>
</comment>
<comment type="interaction">
    <interactant intactId="EBI-11096309">
        <id>Q9NYB9-2</id>
    </interactant>
    <interactant intactId="EBI-465781">
        <id>Q9UL45</id>
        <label>BLOC1S6</label>
    </interactant>
    <organismsDiffer>false</organismsDiffer>
    <experiments>6</experiments>
</comment>
<comment type="interaction">
    <interactant intactId="EBI-11096309">
        <id>Q9NYB9-2</id>
    </interactant>
    <interactant intactId="EBI-10193358">
        <id>Q96GS4</id>
        <label>BORCS6</label>
    </interactant>
    <organismsDiffer>false</organismsDiffer>
    <experiments>5</experiments>
</comment>
<comment type="interaction">
    <interactant intactId="EBI-11096309">
        <id>Q9NYB9-2</id>
    </interactant>
    <interactant intactId="EBI-747505">
        <id>Q8TAB5</id>
        <label>C1orf216</label>
    </interactant>
    <organismsDiffer>false</organismsDiffer>
    <experiments>3</experiments>
</comment>
<comment type="interaction">
    <interactant intactId="EBI-11096309">
        <id>Q9NYB9-2</id>
    </interactant>
    <interactant intactId="EBI-18396958">
        <id>A1L168</id>
        <label>C20orf202</label>
    </interactant>
    <organismsDiffer>false</organismsDiffer>
    <experiments>3</experiments>
</comment>
<comment type="interaction">
    <interactant intactId="EBI-11096309">
        <id>Q9NYB9-2</id>
    </interactant>
    <interactant intactId="EBI-715110">
        <id>Q53FE4</id>
        <label>C4orf17</label>
    </interactant>
    <organismsDiffer>false</organismsDiffer>
    <experiments>3</experiments>
</comment>
<comment type="interaction">
    <interactant intactId="EBI-11096309">
        <id>Q9NYB9-2</id>
    </interactant>
    <interactant intactId="EBI-10171570">
        <id>Q68D86</id>
        <label>CCDC102B</label>
    </interactant>
    <organismsDiffer>false</organismsDiffer>
    <experiments>3</experiments>
</comment>
<comment type="interaction">
    <interactant intactId="EBI-11096309">
        <id>Q9NYB9-2</id>
    </interactant>
    <interactant intactId="EBI-2810325">
        <id>Q96NT0</id>
        <label>CCDC115</label>
    </interactant>
    <organismsDiffer>false</organismsDiffer>
    <experiments>5</experiments>
</comment>
<comment type="interaction">
    <interactant intactId="EBI-11096309">
        <id>Q9NYB9-2</id>
    </interactant>
    <interactant intactId="EBI-10961624">
        <id>Q2TAC2-2</id>
        <label>CCDC57</label>
    </interactant>
    <organismsDiffer>false</organismsDiffer>
    <experiments>3</experiments>
</comment>
<comment type="interaction">
    <interactant intactId="EBI-11096309">
        <id>Q9NYB9-2</id>
    </interactant>
    <interactant intactId="EBI-17967022">
        <id>Q96LY2-2</id>
        <label>CCDC74B</label>
    </interactant>
    <organismsDiffer>false</organismsDiffer>
    <experiments>3</experiments>
</comment>
<comment type="interaction">
    <interactant intactId="EBI-11096309">
        <id>Q9NYB9-2</id>
    </interactant>
    <interactant intactId="EBI-10175300">
        <id>Q8TD31-3</id>
        <label>CCHCR1</label>
    </interactant>
    <organismsDiffer>false</organismsDiffer>
    <experiments>3</experiments>
</comment>
<comment type="interaction">
    <interactant intactId="EBI-11096309">
        <id>Q9NYB9-2</id>
    </interactant>
    <interactant intactId="EBI-1003700">
        <id>Q9H3R5</id>
        <label>CENPH</label>
    </interactant>
    <organismsDiffer>false</organismsDiffer>
    <experiments>6</experiments>
</comment>
<comment type="interaction">
    <interactant intactId="EBI-11096309">
        <id>Q9NYB9-2</id>
    </interactant>
    <interactant intactId="EBI-2350265">
        <id>Q7L2Z9</id>
        <label>CENPQ</label>
    </interactant>
    <organismsDiffer>false</organismsDiffer>
    <experiments>3</experiments>
</comment>
<comment type="interaction">
    <interactant intactId="EBI-11096309">
        <id>Q9NYB9-2</id>
    </interactant>
    <interactant intactId="EBI-744115">
        <id>Q9C0F1</id>
        <label>CEP44</label>
    </interactant>
    <organismsDiffer>false</organismsDiffer>
    <experiments>3</experiments>
</comment>
<comment type="interaction">
    <interactant intactId="EBI-11096309">
        <id>Q9NYB9-2</id>
    </interactant>
    <interactant intactId="EBI-11752486">
        <id>Q86XR8-3</id>
        <label>CEP57</label>
    </interactant>
    <organismsDiffer>false</organismsDiffer>
    <experiments>3</experiments>
</comment>
<comment type="interaction">
    <interactant intactId="EBI-11096309">
        <id>Q9NYB9-2</id>
    </interactant>
    <interactant intactId="EBI-12160437">
        <id>A8MTA8-2</id>
        <label>CIMIP2B</label>
    </interactant>
    <organismsDiffer>false</organismsDiffer>
    <experiments>3</experiments>
</comment>
<comment type="interaction">
    <interactant intactId="EBI-11096309">
        <id>Q9NYB9-2</id>
    </interactant>
    <interactant intactId="EBI-1056029">
        <id>Q16740</id>
        <label>CLPP</label>
    </interactant>
    <organismsDiffer>false</organismsDiffer>
    <experiments>3</experiments>
</comment>
<comment type="interaction">
    <interactant intactId="EBI-11096309">
        <id>Q9NYB9-2</id>
    </interactant>
    <interactant intactId="EBI-9091495">
        <id>Q96JB2-2</id>
        <label>COG3</label>
    </interactant>
    <organismsDiffer>false</organismsDiffer>
    <experiments>3</experiments>
</comment>
<comment type="interaction">
    <interactant intactId="EBI-11096309">
        <id>Q9NYB9-2</id>
    </interactant>
    <interactant intactId="EBI-5838167">
        <id>Q9NWM3</id>
        <label>CUEDC1</label>
    </interactant>
    <organismsDiffer>false</organismsDiffer>
    <experiments>3</experiments>
</comment>
<comment type="interaction">
    <interactant intactId="EBI-11096309">
        <id>Q9NYB9-2</id>
    </interactant>
    <interactant intactId="EBI-715074">
        <id>Q13561</id>
        <label>DCTN2</label>
    </interactant>
    <organismsDiffer>false</organismsDiffer>
    <experiments>3</experiments>
</comment>
<comment type="interaction">
    <interactant intactId="EBI-11096309">
        <id>Q9NYB9-2</id>
    </interactant>
    <interactant intactId="EBI-11988027">
        <id>Q9NRI5-2</id>
        <label>DISC1</label>
    </interactant>
    <organismsDiffer>false</organismsDiffer>
    <experiments>3</experiments>
</comment>
<comment type="interaction">
    <interactant intactId="EBI-11096309">
        <id>Q9NYB9-2</id>
    </interactant>
    <interactant intactId="EBI-12019838">
        <id>Q9P1A6-3</id>
        <label>DLGAP2</label>
    </interactant>
    <organismsDiffer>false</organismsDiffer>
    <experiments>3</experiments>
</comment>
<comment type="interaction">
    <interactant intactId="EBI-11096309">
        <id>Q9NYB9-2</id>
    </interactant>
    <interactant intactId="EBI-12000556">
        <id>Q9Y2H0-1</id>
        <label>DLGAP4</label>
    </interactant>
    <organismsDiffer>false</organismsDiffer>
    <experiments>3</experiments>
</comment>
<comment type="interaction">
    <interactant intactId="EBI-11096309">
        <id>Q9NYB9-2</id>
    </interactant>
    <interactant intactId="EBI-5235378">
        <id>Q6TDU7</id>
        <label>DNAI7</label>
    </interactant>
    <organismsDiffer>false</organismsDiffer>
    <experiments>3</experiments>
</comment>
<comment type="interaction">
    <interactant intactId="EBI-11096309">
        <id>Q9NYB9-2</id>
    </interactant>
    <interactant intactId="EBI-11984733">
        <id>O60941-5</id>
        <label>DTNB</label>
    </interactant>
    <organismsDiffer>false</organismsDiffer>
    <experiments>5</experiments>
</comment>
<comment type="interaction">
    <interactant intactId="EBI-11096309">
        <id>Q9NYB9-2</id>
    </interactant>
    <interactant intactId="EBI-11525448">
        <id>O43281-2</id>
        <label>EFS</label>
    </interactant>
    <organismsDiffer>false</organismsDiffer>
    <experiments>5</experiments>
</comment>
<comment type="interaction">
    <interactant intactId="EBI-11096309">
        <id>Q9NYB9-2</id>
    </interactant>
    <interactant intactId="EBI-19949420">
        <id>Q05215</id>
        <label>EGR4</label>
    </interactant>
    <organismsDiffer>false</organismsDiffer>
    <experiments>3</experiments>
</comment>
<comment type="interaction">
    <interactant intactId="EBI-11096309">
        <id>Q9NYB9-2</id>
    </interactant>
    <interactant intactId="EBI-744099">
        <id>Q9H0I2</id>
        <label>ENKD1</label>
    </interactant>
    <organismsDiffer>false</organismsDiffer>
    <experiments>6</experiments>
</comment>
<comment type="interaction">
    <interactant intactId="EBI-11096309">
        <id>Q9NYB9-2</id>
    </interactant>
    <interactant intactId="EBI-12003490">
        <id>Q8TE68-2</id>
        <label>EPS8L1</label>
    </interactant>
    <organismsDiffer>false</organismsDiffer>
    <experiments>3</experiments>
</comment>
<comment type="interaction">
    <interactant intactId="EBI-11096309">
        <id>Q9NYB9-2</id>
    </interactant>
    <interactant intactId="EBI-7225287">
        <id>Q96MY7</id>
        <label>FAM161B</label>
    </interactant>
    <organismsDiffer>false</organismsDiffer>
    <experiments>3</experiments>
</comment>
<comment type="interaction">
    <interactant intactId="EBI-11096309">
        <id>Q9NYB9-2</id>
    </interactant>
    <interactant intactId="EBI-6658203">
        <id>Q86YD7</id>
        <label>FAM90A1</label>
    </interactant>
    <organismsDiffer>false</organismsDiffer>
    <experiments>3</experiments>
</comment>
<comment type="interaction">
    <interactant intactId="EBI-11096309">
        <id>Q9NYB9-2</id>
    </interactant>
    <interactant intactId="EBI-2870039">
        <id>Q8IZT9</id>
        <label>FAM9C</label>
    </interactant>
    <organismsDiffer>false</organismsDiffer>
    <experiments>3</experiments>
</comment>
<comment type="interaction">
    <interactant intactId="EBI-11096309">
        <id>Q9NYB9-2</id>
    </interactant>
    <interactant intactId="EBI-11959077">
        <id>Q6PCT2-2</id>
        <label>FBXL19</label>
    </interactant>
    <organismsDiffer>false</organismsDiffer>
    <experiments>3</experiments>
</comment>
<comment type="interaction">
    <interactant intactId="EBI-11096309">
        <id>Q9NYB9-2</id>
    </interactant>
    <interactant intactId="EBI-750641">
        <id>Q5TD97</id>
        <label>FHL5</label>
    </interactant>
    <organismsDiffer>false</organismsDiffer>
    <experiments>3</experiments>
</comment>
<comment type="interaction">
    <interactant intactId="EBI-11096309">
        <id>Q9NYB9-2</id>
    </interactant>
    <interactant intactId="EBI-10226858">
        <id>Q0VDC6</id>
        <label>FKBP1A</label>
    </interactant>
    <organismsDiffer>false</organismsDiffer>
    <experiments>3</experiments>
</comment>
<comment type="interaction">
    <interactant intactId="EBI-11096309">
        <id>Q9NYB9-2</id>
    </interactant>
    <interactant intactId="EBI-11320806">
        <id>Q9NU39</id>
        <label>FOXD4L1</label>
    </interactant>
    <organismsDiffer>false</organismsDiffer>
    <experiments>3</experiments>
</comment>
<comment type="interaction">
    <interactant intactId="EBI-11096309">
        <id>Q9NYB9-2</id>
    </interactant>
    <interactant intactId="EBI-7960826">
        <id>Q8NHY3</id>
        <label>GAS2L2</label>
    </interactant>
    <organismsDiffer>false</organismsDiffer>
    <experiments>3</experiments>
</comment>
<comment type="interaction">
    <interactant intactId="EBI-11096309">
        <id>Q9NYB9-2</id>
    </interactant>
    <interactant intactId="EBI-744302">
        <id>P14136</id>
        <label>GFAP</label>
    </interactant>
    <organismsDiffer>false</organismsDiffer>
    <experiments>6</experiments>
</comment>
<comment type="interaction">
    <interactant intactId="EBI-11096309">
        <id>Q9NYB9-2</id>
    </interactant>
    <interactant intactId="EBI-10259069">
        <id>Q86UU5</id>
        <label>GGN</label>
    </interactant>
    <organismsDiffer>false</organismsDiffer>
    <experiments>3</experiments>
</comment>
<comment type="interaction">
    <interactant intactId="EBI-11096309">
        <id>Q9NYB9-2</id>
    </interactant>
    <interactant intactId="EBI-751540">
        <id>O95872</id>
        <label>GPANK1</label>
    </interactant>
    <organismsDiffer>false</organismsDiffer>
    <experiments>3</experiments>
</comment>
<comment type="interaction">
    <interactant intactId="EBI-11096309">
        <id>Q9NYB9-2</id>
    </interactant>
    <interactant intactId="EBI-747421">
        <id>Q03014</id>
        <label>HHEX</label>
    </interactant>
    <organismsDiffer>false</organismsDiffer>
    <experiments>3</experiments>
</comment>
<comment type="interaction">
    <interactant intactId="EBI-11096309">
        <id>Q9NYB9-2</id>
    </interactant>
    <interactant intactId="EBI-7060731">
        <id>P61978-2</id>
        <label>HNRNPK</label>
    </interactant>
    <organismsDiffer>false</organismsDiffer>
    <experiments>6</experiments>
</comment>
<comment type="interaction">
    <interactant intactId="EBI-11096309">
        <id>Q9NYB9-2</id>
    </interactant>
    <interactant intactId="EBI-748420">
        <id>Q9NSC5</id>
        <label>HOMER3</label>
    </interactant>
    <organismsDiffer>false</organismsDiffer>
    <experiments>3</experiments>
</comment>
<comment type="interaction">
    <interactant intactId="EBI-11096309">
        <id>Q9NYB9-2</id>
    </interactant>
    <interactant intactId="EBI-7116203">
        <id>O75031</id>
        <label>HSF2BP</label>
    </interactant>
    <organismsDiffer>false</organismsDiffer>
    <experiments>3</experiments>
</comment>
<comment type="interaction">
    <interactant intactId="EBI-11096309">
        <id>Q9NYB9-2</id>
    </interactant>
    <interactant intactId="EBI-9091197">
        <id>Q8IY31-3</id>
        <label>IFT20</label>
    </interactant>
    <organismsDiffer>false</organismsDiffer>
    <experiments>7</experiments>
</comment>
<comment type="interaction">
    <interactant intactId="EBI-11096309">
        <id>Q9NYB9-2</id>
    </interactant>
    <interactant intactId="EBI-8638439">
        <id>Q8IYA8</id>
        <label>IHO1</label>
    </interactant>
    <organismsDiffer>false</organismsDiffer>
    <experiments>3</experiments>
</comment>
<comment type="interaction">
    <interactant intactId="EBI-11096309">
        <id>Q9NYB9-2</id>
    </interactant>
    <interactant intactId="EBI-6509505">
        <id>Q0VD86</id>
        <label>INCA1</label>
    </interactant>
    <organismsDiffer>false</organismsDiffer>
    <experiments>3</experiments>
</comment>
<comment type="interaction">
    <interactant intactId="EBI-11096309">
        <id>Q9NYB9-2</id>
    </interactant>
    <interactant intactId="EBI-715611">
        <id>Q9C086</id>
        <label>INO80B</label>
    </interactant>
    <organismsDiffer>false</organismsDiffer>
    <experiments>3</experiments>
</comment>
<comment type="interaction">
    <interactant intactId="EBI-11096309">
        <id>Q9NYB9-2</id>
    </interactant>
    <interactant intactId="EBI-4311436">
        <id>Q2T9L4</id>
        <label>INSYN1</label>
    </interactant>
    <organismsDiffer>false</organismsDiffer>
    <experiments>3</experiments>
</comment>
<comment type="interaction">
    <interactant intactId="EBI-11096309">
        <id>Q9NYB9-2</id>
    </interactant>
    <interactant intactId="EBI-1055254">
        <id>Q8WXH2</id>
        <label>JPH3</label>
    </interactant>
    <organismsDiffer>false</organismsDiffer>
    <experiments>3</experiments>
</comment>
<comment type="interaction">
    <interactant intactId="EBI-11096309">
        <id>Q9NYB9-2</id>
    </interactant>
    <interactant intactId="EBI-10188326">
        <id>Q5T5P2-6</id>
        <label>KIAA1217</label>
    </interactant>
    <organismsDiffer>false</organismsDiffer>
    <experiments>3</experiments>
</comment>
<comment type="interaction">
    <interactant intactId="EBI-11096309">
        <id>Q9NYB9-2</id>
    </interactant>
    <interactant intactId="EBI-14069005">
        <id>Q9BVG8-5</id>
        <label>KIFC3</label>
    </interactant>
    <organismsDiffer>false</organismsDiffer>
    <experiments>3</experiments>
</comment>
<comment type="interaction">
    <interactant intactId="EBI-11096309">
        <id>Q9NYB9-2</id>
    </interactant>
    <interactant intactId="EBI-373334">
        <id>Q9Y448</id>
        <label>KNSTRN</label>
    </interactant>
    <organismsDiffer>false</organismsDiffer>
    <experiments>3</experiments>
</comment>
<comment type="interaction">
    <interactant intactId="EBI-11096309">
        <id>Q9NYB9-2</id>
    </interactant>
    <interactant intactId="EBI-702178">
        <id>P02533</id>
        <label>KRT14</label>
    </interactant>
    <organismsDiffer>false</organismsDiffer>
    <experiments>3</experiments>
</comment>
<comment type="interaction">
    <interactant intactId="EBI-11096309">
        <id>Q9NYB9-2</id>
    </interactant>
    <interactant intactId="EBI-739566">
        <id>P19012</id>
        <label>KRT15</label>
    </interactant>
    <organismsDiffer>false</organismsDiffer>
    <experiments>3</experiments>
</comment>
<comment type="interaction">
    <interactant intactId="EBI-11096309">
        <id>Q9NYB9-2</id>
    </interactant>
    <interactant intactId="EBI-742756">
        <id>P08727</id>
        <label>KRT19</label>
    </interactant>
    <organismsDiffer>false</organismsDiffer>
    <experiments>3</experiments>
</comment>
<comment type="interaction">
    <interactant intactId="EBI-11096309">
        <id>Q9NYB9-2</id>
    </interactant>
    <interactant intactId="EBI-2952736">
        <id>Q2M2I5</id>
        <label>KRT24</label>
    </interactant>
    <organismsDiffer>false</organismsDiffer>
    <experiments>3</experiments>
</comment>
<comment type="interaction">
    <interactant intactId="EBI-11096309">
        <id>Q9NYB9-2</id>
    </interactant>
    <interactant intactId="EBI-3044087">
        <id>Q7Z3Y8</id>
        <label>KRT27</label>
    </interactant>
    <organismsDiffer>false</organismsDiffer>
    <experiments>3</experiments>
</comment>
<comment type="interaction">
    <interactant intactId="EBI-11096309">
        <id>Q9NYB9-2</id>
    </interactant>
    <interactant intactId="EBI-1047093">
        <id>O76011</id>
        <label>KRT34</label>
    </interactant>
    <organismsDiffer>false</organismsDiffer>
    <experiments>3</experiments>
</comment>
<comment type="interaction">
    <interactant intactId="EBI-11096309">
        <id>Q9NYB9-2</id>
    </interactant>
    <interactant intactId="EBI-11958506">
        <id>O76013-2</id>
        <label>KRT36</label>
    </interactant>
    <organismsDiffer>false</organismsDiffer>
    <experiments>3</experiments>
</comment>
<comment type="interaction">
    <interactant intactId="EBI-11096309">
        <id>Q9NYB9-2</id>
    </interactant>
    <interactant intactId="EBI-2949715">
        <id>O95678</id>
        <label>KRT75</label>
    </interactant>
    <organismsDiffer>false</organismsDiffer>
    <experiments>3</experiments>
</comment>
<comment type="interaction">
    <interactant intactId="EBI-11096309">
        <id>Q9NYB9-2</id>
    </interactant>
    <interactant intactId="EBI-726510">
        <id>Q96BZ8</id>
        <label>LENG1</label>
    </interactant>
    <organismsDiffer>false</organismsDiffer>
    <experiments>3</experiments>
</comment>
<comment type="interaction">
    <interactant intactId="EBI-11096309">
        <id>Q9NYB9-2</id>
    </interactant>
    <interactant intactId="EBI-10240775">
        <id>Q3B8N2</id>
        <label>LGALS9B</label>
    </interactant>
    <organismsDiffer>false</organismsDiffer>
    <experiments>3</experiments>
</comment>
<comment type="interaction">
    <interactant intactId="EBI-11096309">
        <id>Q9NYB9-2</id>
    </interactant>
    <interactant intactId="EBI-12039345">
        <id>Q9UBR4-2</id>
        <label>LHX3</label>
    </interactant>
    <organismsDiffer>false</organismsDiffer>
    <experiments>3</experiments>
</comment>
<comment type="interaction">
    <interactant intactId="EBI-11096309">
        <id>Q9NYB9-2</id>
    </interactant>
    <interactant intactId="EBI-8474075">
        <id>Q68G74</id>
        <label>LHX8</label>
    </interactant>
    <organismsDiffer>false</organismsDiffer>
    <experiments>3</experiments>
</comment>
<comment type="interaction">
    <interactant intactId="EBI-11096309">
        <id>Q9NYB9-2</id>
    </interactant>
    <interactant intactId="EBI-8639312">
        <id>P25800</id>
        <label>LMO1</label>
    </interactant>
    <organismsDiffer>false</organismsDiffer>
    <experiments>8</experiments>
</comment>
<comment type="interaction">
    <interactant intactId="EBI-11096309">
        <id>Q9NYB9-2</id>
    </interactant>
    <interactant intactId="EBI-11959475">
        <id>P25791-3</id>
        <label>LMO2</label>
    </interactant>
    <organismsDiffer>false</organismsDiffer>
    <experiments>6</experiments>
</comment>
<comment type="interaction">
    <interactant intactId="EBI-11096309">
        <id>Q9NYB9-2</id>
    </interactant>
    <interactant intactId="EBI-11742507">
        <id>Q8TAP4-4</id>
        <label>LMO3</label>
    </interactant>
    <organismsDiffer>false</organismsDiffer>
    <experiments>3</experiments>
</comment>
<comment type="interaction">
    <interactant intactId="EBI-11096309">
        <id>Q9NYB9-2</id>
    </interactant>
    <interactant intactId="EBI-2798728">
        <id>P61968</id>
        <label>LMO4</label>
    </interactant>
    <organismsDiffer>false</organismsDiffer>
    <experiments>3</experiments>
</comment>
<comment type="interaction">
    <interactant intactId="EBI-11096309">
        <id>Q9NYB9-2</id>
    </interactant>
    <interactant intactId="EBI-739832">
        <id>Q8TBB1</id>
        <label>LNX1</label>
    </interactant>
    <organismsDiffer>false</organismsDiffer>
    <experiments>3</experiments>
</comment>
<comment type="interaction">
    <interactant intactId="EBI-11096309">
        <id>Q9NYB9-2</id>
    </interactant>
    <interactant intactId="EBI-741355">
        <id>Q96LR2</id>
        <label>LURAP1</label>
    </interactant>
    <organismsDiffer>false</organismsDiffer>
    <experiments>3</experiments>
</comment>
<comment type="interaction">
    <interactant intactId="EBI-11096309">
        <id>Q9NYB9-2</id>
    </interactant>
    <interactant intactId="EBI-741037">
        <id>Q9BRK4</id>
        <label>LZTS2</label>
    </interactant>
    <organismsDiffer>false</organismsDiffer>
    <experiments>3</experiments>
</comment>
<comment type="interaction">
    <interactant intactId="EBI-11096309">
        <id>Q9NYB9-2</id>
    </interactant>
    <interactant intactId="EBI-740978">
        <id>P43355</id>
        <label>MAGEA1</label>
    </interactant>
    <organismsDiffer>false</organismsDiffer>
    <experiments>3</experiments>
</comment>
<comment type="interaction">
    <interactant intactId="EBI-11096309">
        <id>Q9NYB9-2</id>
    </interactant>
    <interactant intactId="EBI-394354">
        <id>Q9BTT4</id>
        <label>MED10</label>
    </interactant>
    <organismsDiffer>false</organismsDiffer>
    <experiments>3</experiments>
</comment>
<comment type="interaction">
    <interactant intactId="EBI-11096309">
        <id>Q9NYB9-2</id>
    </interactant>
    <interactant intactId="EBI-394704">
        <id>Q9P086</id>
        <label>MED11</label>
    </interactant>
    <organismsDiffer>false</organismsDiffer>
    <experiments>3</experiments>
</comment>
<comment type="interaction">
    <interactant intactId="EBI-11096309">
        <id>Q9NYB9-2</id>
    </interactant>
    <interactant intactId="EBI-394656">
        <id>Q9NX70</id>
        <label>MED29</label>
    </interactant>
    <organismsDiffer>false</organismsDiffer>
    <experiments>3</experiments>
</comment>
<comment type="interaction">
    <interactant intactId="EBI-11096309">
        <id>Q9NYB9-2</id>
    </interactant>
    <interactant intactId="EBI-16439278">
        <id>Q6FHY5</id>
        <label>MEOX2</label>
    </interactant>
    <organismsDiffer>false</organismsDiffer>
    <experiments>3</experiments>
</comment>
<comment type="interaction">
    <interactant intactId="EBI-11096309">
        <id>Q9NYB9-2</id>
    </interactant>
    <interactant intactId="EBI-995714">
        <id>Q9Y605</id>
        <label>MRFAP1</label>
    </interactant>
    <organismsDiffer>false</organismsDiffer>
    <experiments>5</experiments>
</comment>
<comment type="interaction">
    <interactant intactId="EBI-11096309">
        <id>Q9NYB9-2</id>
    </interactant>
    <interactant intactId="EBI-723426">
        <id>Q13084</id>
        <label>MRPL28</label>
    </interactant>
    <organismsDiffer>false</organismsDiffer>
    <experiments>3</experiments>
</comment>
<comment type="interaction">
    <interactant intactId="EBI-11096309">
        <id>Q9NYB9-2</id>
    </interactant>
    <interactant intactId="EBI-7950783">
        <id>Q96JP2</id>
        <label>MYO15B</label>
    </interactant>
    <organismsDiffer>false</organismsDiffer>
    <experiments>3</experiments>
</comment>
<comment type="interaction">
    <interactant intactId="EBI-11096309">
        <id>Q9NYB9-2</id>
    </interactant>
    <interactant intactId="EBI-3906629">
        <id>P15173</id>
        <label>MYOG</label>
    </interactant>
    <organismsDiffer>false</organismsDiffer>
    <experiments>3</experiments>
</comment>
<comment type="interaction">
    <interactant intactId="EBI-11096309">
        <id>Q9NYB9-2</id>
    </interactant>
    <interactant intactId="EBI-5662487">
        <id>Q8TDC0</id>
        <label>MYOZ3</label>
    </interactant>
    <organismsDiffer>false</organismsDiffer>
    <experiments>3</experiments>
</comment>
<comment type="interaction">
    <interactant intactId="EBI-11096309">
        <id>Q9NYB9-2</id>
    </interactant>
    <interactant intactId="EBI-16429340">
        <id>A0A0S2Z4D7</id>
        <label>NCK1</label>
    </interactant>
    <organismsDiffer>false</organismsDiffer>
    <experiments>3</experiments>
</comment>
<comment type="interaction">
    <interactant intactId="EBI-11096309">
        <id>Q9NYB9-2</id>
    </interactant>
    <interactant intactId="EBI-16432934">
        <id>A0A0S2Z4E4</id>
        <label>NCK1</label>
    </interactant>
    <organismsDiffer>false</organismsDiffer>
    <experiments>3</experiments>
</comment>
<comment type="interaction">
    <interactant intactId="EBI-11096309">
        <id>Q9NYB9-2</id>
    </interactant>
    <interactant intactId="EBI-713635">
        <id>O43639</id>
        <label>NCK2</label>
    </interactant>
    <organismsDiffer>false</organismsDiffer>
    <experiments>10</experiments>
</comment>
<comment type="interaction">
    <interactant intactId="EBI-11096309">
        <id>Q9NYB9-2</id>
    </interactant>
    <interactant intactId="EBI-10963850">
        <id>Q9NZQ3-3</id>
        <label>NCKIPSD</label>
    </interactant>
    <organismsDiffer>false</organismsDiffer>
    <experiments>3</experiments>
</comment>
<comment type="interaction">
    <interactant intactId="EBI-11096309">
        <id>Q9NYB9-2</id>
    </interactant>
    <interactant intactId="EBI-12035911">
        <id>O94856-3</id>
        <label>NFASC</label>
    </interactant>
    <organismsDiffer>false</organismsDiffer>
    <experiments>3</experiments>
</comment>
<comment type="interaction">
    <interactant intactId="EBI-11096309">
        <id>Q9NYB9-2</id>
    </interactant>
    <interactant intactId="EBI-2859639">
        <id>Q5HYW2</id>
        <label>NHSL2</label>
    </interactant>
    <organismsDiffer>false</organismsDiffer>
    <experiments>9</experiments>
</comment>
<comment type="interaction">
    <interactant intactId="EBI-11096309">
        <id>Q9NYB9-2</id>
    </interactant>
    <interactant intactId="EBI-744871">
        <id>O00746</id>
        <label>NME4</label>
    </interactant>
    <organismsDiffer>false</organismsDiffer>
    <experiments>3</experiments>
</comment>
<comment type="interaction">
    <interactant intactId="EBI-11096309">
        <id>Q9NYB9-2</id>
    </interactant>
    <interactant intactId="EBI-536879">
        <id>O43482</id>
        <label>OIP5</label>
    </interactant>
    <organismsDiffer>false</organismsDiffer>
    <experiments>3</experiments>
</comment>
<comment type="interaction">
    <interactant intactId="EBI-11096309">
        <id>Q9NYB9-2</id>
    </interactant>
    <interactant intactId="EBI-18583589">
        <id>A6NGQ2</id>
        <label>OOEP</label>
    </interactant>
    <organismsDiffer>false</organismsDiffer>
    <experiments>3</experiments>
</comment>
<comment type="interaction">
    <interactant intactId="EBI-11096309">
        <id>Q9NYB9-2</id>
    </interactant>
    <interactant intactId="EBI-1045887">
        <id>Q13177</id>
        <label>PAK2</label>
    </interactant>
    <organismsDiffer>false</organismsDiffer>
    <experiments>3</experiments>
</comment>
<comment type="interaction">
    <interactant intactId="EBI-11096309">
        <id>Q9NYB9-2</id>
    </interactant>
    <interactant intactId="EBI-11742977">
        <id>Q15154-3</id>
        <label>PCM1</label>
    </interactant>
    <organismsDiffer>false</organismsDiffer>
    <experiments>3</experiments>
</comment>
<comment type="interaction">
    <interactant intactId="EBI-11096309">
        <id>Q9NYB9-2</id>
    </interactant>
    <interactant intactId="EBI-350517">
        <id>Q9NR12</id>
        <label>PDLIM7</label>
    </interactant>
    <organismsDiffer>false</organismsDiffer>
    <experiments>3</experiments>
</comment>
<comment type="interaction">
    <interactant intactId="EBI-11096309">
        <id>Q9NYB9-2</id>
    </interactant>
    <interactant intactId="EBI-357275">
        <id>Q99471</id>
        <label>PFDN5</label>
    </interactant>
    <organismsDiffer>false</organismsDiffer>
    <experiments>3</experiments>
</comment>
<comment type="interaction">
    <interactant intactId="EBI-11096309">
        <id>Q9NYB9-2</id>
    </interactant>
    <interactant intactId="EBI-14131832">
        <id>Q8N4B1-4</id>
        <label>PHETA1</label>
    </interactant>
    <organismsDiffer>false</organismsDiffer>
    <experiments>8</experiments>
</comment>
<comment type="interaction">
    <interactant intactId="EBI-11096309">
        <id>Q9NYB9-2</id>
    </interactant>
    <interactant intactId="EBI-530034">
        <id>O43189</id>
        <label>PHF1</label>
    </interactant>
    <organismsDiffer>false</organismsDiffer>
    <experiments>3</experiments>
</comment>
<comment type="interaction">
    <interactant intactId="EBI-11096309">
        <id>Q9NYB9-2</id>
    </interactant>
    <interactant intactId="EBI-714158">
        <id>Q13526</id>
        <label>PIN1</label>
    </interactant>
    <organismsDiffer>false</organismsDiffer>
    <experiments>3</experiments>
</comment>
<comment type="interaction">
    <interactant intactId="EBI-11096309">
        <id>Q9NYB9-2</id>
    </interactant>
    <interactant intactId="EBI-12014286">
        <id>Q494U1-3</id>
        <label>PLEKHN1</label>
    </interactant>
    <organismsDiffer>false</organismsDiffer>
    <experiments>3</experiments>
</comment>
<comment type="interaction">
    <interactant intactId="EBI-11096309">
        <id>Q9NYB9-2</id>
    </interactant>
    <interactant intactId="EBI-12219503">
        <id>P01189</id>
        <label>POMC</label>
    </interactant>
    <organismsDiffer>false</organismsDiffer>
    <experiments>3</experiments>
</comment>
<comment type="interaction">
    <interactant intactId="EBI-11096309">
        <id>Q9NYB9-2</id>
    </interactant>
    <interactant intactId="EBI-5544229">
        <id>P30405</id>
        <label>PPIF</label>
    </interactant>
    <organismsDiffer>false</organismsDiffer>
    <experiments>3</experiments>
</comment>
<comment type="interaction">
    <interactant intactId="EBI-11096309">
        <id>Q9NYB9-2</id>
    </interactant>
    <interactant intactId="EBI-11959013">
        <id>Q08209-2</id>
        <label>PPP3CA</label>
    </interactant>
    <organismsDiffer>false</organismsDiffer>
    <experiments>3</experiments>
</comment>
<comment type="interaction">
    <interactant intactId="EBI-11096309">
        <id>Q9NYB9-2</id>
    </interactant>
    <interactant intactId="EBI-3957793">
        <id>Q9GZV8</id>
        <label>PRDM14</label>
    </interactant>
    <organismsDiffer>false</organismsDiffer>
    <experiments>3</experiments>
</comment>
<comment type="interaction">
    <interactant intactId="EBI-11096309">
        <id>Q9NYB9-2</id>
    </interactant>
    <interactant intactId="EBI-11320284">
        <id>Q9NQX0</id>
        <label>PRDM6</label>
    </interactant>
    <organismsDiffer>false</organismsDiffer>
    <experiments>3</experiments>
</comment>
<comment type="interaction">
    <interactant intactId="EBI-11096309">
        <id>Q9NYB9-2</id>
    </interactant>
    <interactant intactId="EBI-1383852">
        <id>P54646</id>
        <label>PRKAA2</label>
    </interactant>
    <organismsDiffer>false</organismsDiffer>
    <experiments>3</experiments>
</comment>
<comment type="interaction">
    <interactant intactId="EBI-11096309">
        <id>Q9NYB9-2</id>
    </interactant>
    <interactant intactId="EBI-5564642">
        <id>Q569H4</id>
        <label>PRR16</label>
    </interactant>
    <organismsDiffer>false</organismsDiffer>
    <experiments>8</experiments>
</comment>
<comment type="interaction">
    <interactant intactId="EBI-11096309">
        <id>Q9NYB9-2</id>
    </interactant>
    <interactant intactId="EBI-12754095">
        <id>P86480</id>
        <label>PRR20D</label>
    </interactant>
    <organismsDiffer>false</organismsDiffer>
    <experiments>3</experiments>
</comment>
<comment type="interaction">
    <interactant intactId="EBI-11096309">
        <id>Q9NYB9-2</id>
    </interactant>
    <interactant intactId="EBI-359352">
        <id>P25786</id>
        <label>PSMA1</label>
    </interactant>
    <organismsDiffer>false</organismsDiffer>
    <experiments>3</experiments>
</comment>
<comment type="interaction">
    <interactant intactId="EBI-11096309">
        <id>Q9NYB9-2</id>
    </interactant>
    <interactant intactId="EBI-10251192">
        <id>Q6NUJ5</id>
        <label>PWWP2B</label>
    </interactant>
    <organismsDiffer>false</organismsDiffer>
    <experiments>3</experiments>
</comment>
<comment type="interaction">
    <interactant intactId="EBI-11096309">
        <id>Q9NYB9-2</id>
    </interactant>
    <interactant intactId="EBI-447043">
        <id>Q15276</id>
        <label>RABEP1</label>
    </interactant>
    <organismsDiffer>false</organismsDiffer>
    <experiments>3</experiments>
</comment>
<comment type="interaction">
    <interactant intactId="EBI-11096309">
        <id>Q9NYB9-2</id>
    </interactant>
    <interactant intactId="EBI-14093916">
        <id>Q9UJ41-4</id>
        <label>RABGEF1</label>
    </interactant>
    <organismsDiffer>false</organismsDiffer>
    <experiments>3</experiments>
</comment>
<comment type="interaction">
    <interactant intactId="EBI-11096309">
        <id>Q9NYB9-2</id>
    </interactant>
    <interactant intactId="EBI-740818">
        <id>Q9Y272</id>
        <label>RASD1</label>
    </interactant>
    <organismsDiffer>false</organismsDiffer>
    <experiments>3</experiments>
</comment>
<comment type="interaction">
    <interactant intactId="EBI-11096309">
        <id>Q9NYB9-2</id>
    </interactant>
    <interactant intactId="EBI-395959">
        <id>Q15287</id>
        <label>RNPS1</label>
    </interactant>
    <organismsDiffer>false</organismsDiffer>
    <experiments>3</experiments>
</comment>
<comment type="interaction">
    <interactant intactId="EBI-11096309">
        <id>Q9NYB9-2</id>
    </interactant>
    <interactant intactId="EBI-366570">
        <id>Q9BUL9</id>
        <label>RPP25</label>
    </interactant>
    <organismsDiffer>false</organismsDiffer>
    <experiments>3</experiments>
</comment>
<comment type="interaction">
    <interactant intactId="EBI-11096309">
        <id>Q9NYB9-2</id>
    </interactant>
    <interactant intactId="EBI-748350">
        <id>Q9UHP6</id>
        <label>RSPH14</label>
    </interactant>
    <organismsDiffer>false</organismsDiffer>
    <experiments>3</experiments>
</comment>
<comment type="interaction">
    <interactant intactId="EBI-11096309">
        <id>Q9NYB9-2</id>
    </interactant>
    <interactant intactId="EBI-6257312">
        <id>Q9BVN2</id>
        <label>RUSC1</label>
    </interactant>
    <organismsDiffer>false</organismsDiffer>
    <experiments>3</experiments>
</comment>
<comment type="interaction">
    <interactant intactId="EBI-11096309">
        <id>Q9NYB9-2</id>
    </interactant>
    <interactant intactId="EBI-749420">
        <id>O76038</id>
        <label>SCGN</label>
    </interactant>
    <organismsDiffer>false</organismsDiffer>
    <experiments>3</experiments>
</comment>
<comment type="interaction">
    <interactant intactId="EBI-11096309">
        <id>Q9NYB9-2</id>
    </interactant>
    <interactant intactId="EBI-346869">
        <id>Q9Y3L3</id>
        <label>SH3BP1</label>
    </interactant>
    <organismsDiffer>false</organismsDiffer>
    <experiments>3</experiments>
</comment>
<comment type="interaction">
    <interactant intactId="EBI-11096309">
        <id>Q9NYB9-2</id>
    </interactant>
    <interactant intactId="EBI-17630587">
        <id>Q13239-3</id>
        <label>SLA</label>
    </interactant>
    <organismsDiffer>false</organismsDiffer>
    <experiments>3</experiments>
</comment>
<comment type="interaction">
    <interactant intactId="EBI-11096309">
        <id>Q9NYB9-2</id>
    </interactant>
    <interactant intactId="EBI-358489">
        <id>Q96GM5</id>
        <label>SMARCD1</label>
    </interactant>
    <organismsDiffer>false</organismsDiffer>
    <experiments>3</experiments>
</comment>
<comment type="interaction">
    <interactant intactId="EBI-11096309">
        <id>Q9NYB9-2</id>
    </interactant>
    <interactant intactId="EBI-12854506">
        <id>O60641-3</id>
        <label>SNAP91</label>
    </interactant>
    <organismsDiffer>false</organismsDiffer>
    <experiments>3</experiments>
</comment>
<comment type="interaction">
    <interactant intactId="EBI-11096309">
        <id>Q9NYB9-2</id>
    </interactant>
    <interactant intactId="EBI-296723">
        <id>O95295</id>
        <label>SNAPIN</label>
    </interactant>
    <organismsDiffer>false</organismsDiffer>
    <experiments>5</experiments>
</comment>
<comment type="interaction">
    <interactant intactId="EBI-11096309">
        <id>Q9NYB9-2</id>
    </interactant>
    <interactant intactId="EBI-298169">
        <id>Q96RF0</id>
        <label>SNX18</label>
    </interactant>
    <organismsDiffer>false</organismsDiffer>
    <experiments>3</experiments>
</comment>
<comment type="interaction">
    <interactant intactId="EBI-11096309">
        <id>Q9NYB9-2</id>
    </interactant>
    <interactant intactId="EBI-12424584">
        <id>Q9UNH6-3</id>
        <label>SNX7</label>
    </interactant>
    <organismsDiffer>false</organismsDiffer>
    <experiments>3</experiments>
</comment>
<comment type="interaction">
    <interactant intactId="EBI-11096309">
        <id>Q9NYB9-2</id>
    </interactant>
    <interactant intactId="EBI-741237">
        <id>O60504</id>
        <label>SORBS3</label>
    </interactant>
    <organismsDiffer>false</organismsDiffer>
    <experiments>3</experiments>
</comment>
<comment type="interaction">
    <interactant intactId="EBI-11096309">
        <id>Q9NYB9-2</id>
    </interactant>
    <interactant intactId="EBI-373258">
        <id>O75886</id>
        <label>STAM2</label>
    </interactant>
    <organismsDiffer>false</organismsDiffer>
    <experiments>3</experiments>
</comment>
<comment type="interaction">
    <interactant intactId="EBI-11096309">
        <id>Q9NYB9-2</id>
    </interactant>
    <interactant intactId="EBI-8484990">
        <id>Q8N4C7</id>
        <label>STX19</label>
    </interactant>
    <organismsDiffer>false</organismsDiffer>
    <experiments>3</experiments>
</comment>
<comment type="interaction">
    <interactant intactId="EBI-11096309">
        <id>Q9NYB9-2</id>
    </interactant>
    <interactant intactId="EBI-744942">
        <id>Q12846</id>
        <label>STX4</label>
    </interactant>
    <organismsDiffer>false</organismsDiffer>
    <experiments>3</experiments>
</comment>
<comment type="interaction">
    <interactant intactId="EBI-11096309">
        <id>Q9NYB9-2</id>
    </interactant>
    <interactant intactId="EBI-11741437">
        <id>Q08117-2</id>
        <label>TLE5</label>
    </interactant>
    <organismsDiffer>false</organismsDiffer>
    <experiments>6</experiments>
</comment>
<comment type="interaction">
    <interactant intactId="EBI-11096309">
        <id>Q9NYB9-2</id>
    </interactant>
    <interactant intactId="EBI-10977815">
        <id>P07951-2</id>
        <label>TPM2</label>
    </interactant>
    <organismsDiffer>false</organismsDiffer>
    <experiments>3</experiments>
</comment>
<comment type="interaction">
    <interactant intactId="EBI-11096309">
        <id>Q9NYB9-2</id>
    </interactant>
    <interactant intactId="EBI-742790">
        <id>Q13049</id>
        <label>TRIM32</label>
    </interactant>
    <organismsDiffer>false</organismsDiffer>
    <experiments>8</experiments>
</comment>
<comment type="interaction">
    <interactant intactId="EBI-11096309">
        <id>Q9NYB9-2</id>
    </interactant>
    <interactant intactId="EBI-2341648">
        <id>Q6ZMU5</id>
        <label>TRIM72</label>
    </interactant>
    <organismsDiffer>false</organismsDiffer>
    <experiments>3</experiments>
</comment>
<comment type="interaction">
    <interactant intactId="EBI-11096309">
        <id>Q9NYB9-2</id>
    </interactant>
    <interactant intactId="EBI-11059915">
        <id>Q8N7C3</id>
        <label>TRIML2</label>
    </interactant>
    <organismsDiffer>false</organismsDiffer>
    <experiments>3</experiments>
</comment>
<comment type="interaction">
    <interactant intactId="EBI-11096309">
        <id>Q9NYB9-2</id>
    </interactant>
    <interactant intactId="EBI-947187">
        <id>Q9UHD9</id>
        <label>UBQLN2</label>
    </interactant>
    <organismsDiffer>false</organismsDiffer>
    <experiments>3</experiments>
</comment>
<comment type="interaction">
    <interactant intactId="EBI-11096309">
        <id>Q9NYB9-2</id>
    </interactant>
    <interactant intactId="EBI-739895">
        <id>Q8N6Y0</id>
        <label>USHBP1</label>
    </interactant>
    <organismsDiffer>false</organismsDiffer>
    <experiments>3</experiments>
</comment>
<comment type="interaction">
    <interactant intactId="EBI-11096309">
        <id>Q9NYB9-2</id>
    </interactant>
    <interactant intactId="EBI-743272">
        <id>O75604</id>
        <label>USP2</label>
    </interactant>
    <organismsDiffer>false</organismsDiffer>
    <experiments>3</experiments>
</comment>
<comment type="interaction">
    <interactant intactId="EBI-11096309">
        <id>Q9NYB9-2</id>
    </interactant>
    <interactant intactId="EBI-2116622">
        <id>Q5ST30</id>
        <label>VARS2</label>
    </interactant>
    <organismsDiffer>false</organismsDiffer>
    <experiments>3</experiments>
</comment>
<comment type="interaction">
    <interactant intactId="EBI-11096309">
        <id>Q9NYB9-2</id>
    </interactant>
    <interactant intactId="EBI-12146727">
        <id>Q9UK41-2</id>
        <label>VPS28</label>
    </interactant>
    <organismsDiffer>false</organismsDiffer>
    <experiments>3</experiments>
</comment>
<comment type="interaction">
    <interactant intactId="EBI-11096309">
        <id>Q9NYB9-2</id>
    </interactant>
    <interactant intactId="EBI-12026286">
        <id>Q9UPY6-2</id>
        <label>WASF3</label>
    </interactant>
    <organismsDiffer>false</organismsDiffer>
    <experiments>3</experiments>
</comment>
<comment type="interaction">
    <interactant intactId="EBI-11096309">
        <id>Q9NYB9-2</id>
    </interactant>
    <interactant intactId="EBI-712969">
        <id>Q9Y3C0</id>
        <label>WASHC3</label>
    </interactant>
    <organismsDiffer>false</organismsDiffer>
    <experiments>5</experiments>
</comment>
<comment type="interaction">
    <interactant intactId="EBI-11096309">
        <id>Q9NYB9-2</id>
    </interactant>
    <interactant intactId="EBI-957615">
        <id>O00401</id>
        <label>WASL</label>
    </interactant>
    <organismsDiffer>false</organismsDiffer>
    <experiments>5</experiments>
</comment>
<comment type="interaction">
    <interactant intactId="EBI-11096309">
        <id>Q9NYB9-2</id>
    </interactant>
    <interactant intactId="EBI-12052927">
        <id>O43516-4</id>
        <label>WIPF1</label>
    </interactant>
    <organismsDiffer>false</organismsDiffer>
    <experiments>3</experiments>
</comment>
<comment type="interaction">
    <interactant intactId="EBI-11096309">
        <id>Q9NYB9-2</id>
    </interactant>
    <interactant intactId="EBI-12040603">
        <id>Q9NZC7-5</id>
        <label>WWOX</label>
    </interactant>
    <organismsDiffer>false</organismsDiffer>
    <experiments>5</experiments>
</comment>
<comment type="interaction">
    <interactant intactId="EBI-11096309">
        <id>Q9NYB9-2</id>
    </interactant>
    <interactant intactId="EBI-11419867">
        <id>Q8TF47</id>
        <label>ZFP90</label>
    </interactant>
    <organismsDiffer>false</organismsDiffer>
    <experiments>3</experiments>
</comment>
<comment type="interaction">
    <interactant intactId="EBI-11096309">
        <id>Q9NYB9-2</id>
    </interactant>
    <interactant intactId="EBI-12030590">
        <id>Q9H0C1</id>
        <label>ZMYND12</label>
    </interactant>
    <organismsDiffer>false</organismsDiffer>
    <experiments>5</experiments>
</comment>
<comment type="interaction">
    <interactant intactId="EBI-11096309">
        <id>Q9NYB9-2</id>
    </interactant>
    <interactant intactId="EBI-17269964">
        <id>Q6S9Z5</id>
        <label>ZNF474</label>
    </interactant>
    <organismsDiffer>false</organismsDiffer>
    <experiments>3</experiments>
</comment>
<comment type="interaction">
    <interactant intactId="EBI-11096309">
        <id>Q9NYB9-2</id>
    </interactant>
    <interactant intactId="EBI-16429014">
        <id>A0A0S2Z5X4</id>
        <label>ZNF688</label>
    </interactant>
    <organismsDiffer>false</organismsDiffer>
    <experiments>3</experiments>
</comment>
<comment type="interaction">
    <interactant intactId="EBI-11096309">
        <id>Q9NYB9-2</id>
    </interactant>
    <interactant intactId="EBI-4395732">
        <id>P0C7X2</id>
        <label>ZNF688</label>
    </interactant>
    <organismsDiffer>false</organismsDiffer>
    <experiments>3</experiments>
</comment>
<comment type="subcellular location">
    <subcellularLocation>
        <location evidence="6 11 12">Cytoplasm</location>
    </subcellularLocation>
    <subcellularLocation>
        <location evidence="11">Nucleus</location>
    </subcellularLocation>
</comment>
<comment type="subcellular location">
    <molecule>Isoform 1</molecule>
    <subcellularLocation>
        <location evidence="6 7">Cell projection</location>
        <location evidence="6 7">Lamellipodium</location>
    </subcellularLocation>
    <subcellularLocation>
        <location evidence="6">Cell projection</location>
        <location evidence="6">Filopodium</location>
    </subcellularLocation>
    <subcellularLocation>
        <location evidence="7">Cytoplasm</location>
        <location evidence="7">Cytoskeleton</location>
    </subcellularLocation>
    <subcellularLocation>
        <location evidence="7">Cell junction</location>
        <location evidence="7">Adherens junction</location>
    </subcellularLocation>
    <text evidence="6 7">Isoform 1 but not isoform 3 is localized to protruding lamellipodia and filopodia tips (PubMed:11516653, PubMed:15572692). Present at nascent adherens junctions, where it clusters adjacent to the tips of F-actin protrusions (PubMed:15572692).</text>
</comment>
<comment type="alternative products">
    <event type="alternative splicing"/>
    <isoform>
        <id>Q9NYB9-1</id>
        <name>1</name>
        <name>Abi-2b</name>
        <sequence type="displayed"/>
    </isoform>
    <isoform>
        <id>Q9NYB9-2</id>
        <name>2</name>
        <sequence type="described" ref="VSP_010761 VSP_010762 VSP_010763"/>
    </isoform>
    <isoform>
        <id>Q9NYB9-3</id>
        <name>3</name>
        <name>Abi-2a</name>
        <sequence type="described" ref="VSP_010759 VSP_010760 VSP_010761 VSP_010762"/>
    </isoform>
    <isoform>
        <id>Q9NYB9-4</id>
        <name>4</name>
        <sequence type="described" ref="VSP_010761"/>
    </isoform>
</comment>
<comment type="tissue specificity">
    <text evidence="11">Widely expressed. Abundant in testes, ovary, thymus, and colon, with lower but detectable levels in prostate, peripheral blood leukocytes, and spleen.</text>
</comment>
<comment type="domain">
    <text evidence="11 12">The SH3 domain is critical for binding to ABL1 and ABL2.</text>
</comment>
<comment type="PTM">
    <text evidence="11">Phosphorylated by ABL1.</text>
</comment>
<comment type="disease">
    <text evidence="10">There is evidence, including phenotypic data from ABI2-knockout mice, that loss-of-function variants in ABI2 may play a role in autosomal recessive intellectual disability.</text>
</comment>
<comment type="similarity">
    <text evidence="21">Belongs to the ABI family.</text>
</comment>
<name>ABI2_HUMAN</name>
<accession>Q9NYB9</accession>
<accession>B4DSN1</accession>
<accession>Q13147</accession>
<accession>Q13249</accession>
<accession>Q13801</accession>
<accession>Q9BV70</accession>
<feature type="chain" id="PRO_0000191790" description="Abl interactor 2">
    <location>
        <begin position="1"/>
        <end position="513"/>
    </location>
</feature>
<feature type="domain" description="t-SNARE coiled-coil homology" evidence="3">
    <location>
        <begin position="45"/>
        <end position="107"/>
    </location>
</feature>
<feature type="domain" description="SH3" evidence="2">
    <location>
        <begin position="451"/>
        <end position="510"/>
    </location>
</feature>
<feature type="region of interest" description="Disordered" evidence="4">
    <location>
        <begin position="167"/>
        <end position="431"/>
    </location>
</feature>
<feature type="compositionally biased region" description="Pro residues" evidence="4">
    <location>
        <begin position="174"/>
        <end position="185"/>
    </location>
</feature>
<feature type="compositionally biased region" description="Polar residues" evidence="4">
    <location>
        <begin position="217"/>
        <end position="241"/>
    </location>
</feature>
<feature type="compositionally biased region" description="Low complexity" evidence="4">
    <location>
        <begin position="242"/>
        <end position="272"/>
    </location>
</feature>
<feature type="compositionally biased region" description="Pro residues" evidence="4">
    <location>
        <begin position="273"/>
        <end position="282"/>
    </location>
</feature>
<feature type="compositionally biased region" description="Low complexity" evidence="4">
    <location>
        <begin position="283"/>
        <end position="325"/>
    </location>
</feature>
<feature type="compositionally biased region" description="Polar residues" evidence="4">
    <location>
        <begin position="376"/>
        <end position="399"/>
    </location>
</feature>
<feature type="compositionally biased region" description="Pro residues" evidence="4">
    <location>
        <begin position="400"/>
        <end position="409"/>
    </location>
</feature>
<feature type="modified residue" description="Phosphoserine" evidence="1">
    <location>
        <position position="40"/>
    </location>
</feature>
<feature type="modified residue" description="Phosphoserine" evidence="26">
    <location>
        <position position="183"/>
    </location>
</feature>
<feature type="modified residue" description="Phosphoserine" evidence="23 24 25 26">
    <location>
        <position position="227"/>
    </location>
</feature>
<feature type="modified residue" description="Phosphothreonine" evidence="1">
    <location>
        <position position="361"/>
    </location>
</feature>
<feature type="modified residue" description="Phosphoserine" evidence="24 26">
    <location>
        <position position="368"/>
    </location>
</feature>
<feature type="splice variant" id="VSP_010759" description="In isoform 3." evidence="16">
    <location>
        <begin position="1"/>
        <end position="45"/>
    </location>
</feature>
<feature type="splice variant" id="VSP_010760" description="In isoform 3." evidence="16">
    <original>ALEETKAYTTQSLASVAYLINTLANNVLQMLDIQASQLRRMESSINHISQ</original>
    <variation>MSCRCWISRHPSYEGWNLQSIIFHKQIRGVDLESTFVTKFGNNCSLRLNE</variation>
    <location>
        <begin position="46"/>
        <end position="95"/>
    </location>
</feature>
<feature type="splice variant" id="VSP_010761" description="In isoform 2, isoform 3 and isoform 4." evidence="13 14 16 17 19 20">
    <location>
        <begin position="154"/>
        <end position="159"/>
    </location>
</feature>
<feature type="splice variant" id="VSP_010762" description="In isoform 2 and isoform 3." evidence="14 16 17 19 20">
    <location>
        <begin position="284"/>
        <end position="344"/>
    </location>
</feature>
<feature type="splice variant" id="VSP_010763" description="In isoform 2." evidence="14 17 19 20">
    <original>S</original>
    <variation>SLAPPPPSILQVTPQLPLMGFVARVQENIS</variation>
    <location>
        <position position="399"/>
    </location>
</feature>
<feature type="sequence variant" id="VAR_080776" description="Found in a consanguineous family with autosomal recessive intellectual disability; likely pathogenic." evidence="10">
    <location>
        <begin position="132"/>
        <end position="513"/>
    </location>
</feature>
<feature type="sequence conflict" description="In Ref. 3; CAA64885." evidence="21" ref="3">
    <original>S</original>
    <variation>R</variation>
    <location>
        <position position="22"/>
    </location>
</feature>
<feature type="sequence conflict" description="In Ref. 3; CAA64885." evidence="21" ref="3">
    <original>A</original>
    <variation>D</variation>
    <location>
        <position position="69"/>
    </location>
</feature>
<feature type="sequence conflict" description="In Ref. 2; AAA75446." evidence="21" ref="2">
    <original>S</original>
    <variation>T</variation>
    <location>
        <position position="243"/>
    </location>
</feature>
<feature type="sequence conflict" description="In Ref. 1; AAA92289." evidence="21" ref="1">
    <original>G</original>
    <variation>P</variation>
    <location>
        <position position="249"/>
    </location>
</feature>
<feature type="sequence conflict" description="In Ref. 5; BAG61693." evidence="21" ref="5">
    <original>N</original>
    <variation>D</variation>
    <location>
        <position position="317"/>
    </location>
</feature>
<feature type="sequence conflict" description="In Ref. 5; BAG61693." evidence="21" ref="5">
    <original>PN</original>
    <variation>QT</variation>
    <location>
        <begin position="324"/>
        <end position="325"/>
    </location>
</feature>
<feature type="sequence conflict" description="In Ref. 2; AAA75446." evidence="21" ref="2">
    <original>A</original>
    <variation>V</variation>
    <location>
        <position position="432"/>
    </location>
</feature>
<feature type="sequence conflict" description="In Ref. 2; AAA75446." evidence="21" ref="2">
    <original>F</original>
    <variation>S</variation>
    <location>
        <position position="500"/>
    </location>
</feature>
<feature type="helix" evidence="28">
    <location>
        <begin position="1"/>
        <end position="9"/>
    </location>
</feature>
<feature type="helix" evidence="28">
    <location>
        <begin position="11"/>
        <end position="39"/>
    </location>
</feature>
<feature type="helix" evidence="28">
    <location>
        <begin position="43"/>
        <end position="110"/>
    </location>
</feature>
<feature type="strand" evidence="28">
    <location>
        <begin position="123"/>
        <end position="125"/>
    </location>
</feature>
<feature type="turn" evidence="28">
    <location>
        <begin position="143"/>
        <end position="151"/>
    </location>
</feature>
<feature type="strand" evidence="27">
    <location>
        <begin position="453"/>
        <end position="458"/>
    </location>
</feature>
<feature type="strand" evidence="27">
    <location>
        <begin position="477"/>
        <end position="483"/>
    </location>
</feature>
<feature type="strand" evidence="27">
    <location>
        <begin position="485"/>
        <end position="493"/>
    </location>
</feature>
<feature type="strand" evidence="27">
    <location>
        <begin position="496"/>
        <end position="501"/>
    </location>
</feature>
<feature type="strand" evidence="27">
    <location>
        <begin position="504"/>
        <end position="507"/>
    </location>
</feature>
<dbReference type="EMBL" id="U23435">
    <property type="protein sequence ID" value="AAA92289.1"/>
    <property type="molecule type" value="mRNA"/>
</dbReference>
<dbReference type="EMBL" id="U31089">
    <property type="protein sequence ID" value="AAA75446.1"/>
    <property type="molecule type" value="mRNA"/>
</dbReference>
<dbReference type="EMBL" id="AF260261">
    <property type="protein sequence ID" value="AAF70308.1"/>
    <property type="molecule type" value="mRNA"/>
</dbReference>
<dbReference type="EMBL" id="X95632">
    <property type="protein sequence ID" value="CAA64885.1"/>
    <property type="molecule type" value="mRNA"/>
</dbReference>
<dbReference type="EMBL" id="BT009920">
    <property type="protein sequence ID" value="AAP88922.1"/>
    <property type="molecule type" value="mRNA"/>
</dbReference>
<dbReference type="EMBL" id="AK299824">
    <property type="protein sequence ID" value="BAG61693.1"/>
    <property type="molecule type" value="mRNA"/>
</dbReference>
<dbReference type="EMBL" id="BC001439">
    <property type="protein sequence ID" value="AAH01439.1"/>
    <property type="molecule type" value="mRNA"/>
</dbReference>
<dbReference type="CCDS" id="CCDS2358.1">
    <molecule id="Q9NYB9-2"/>
</dbReference>
<dbReference type="CCDS" id="CCDS63093.1">
    <molecule id="Q9NYB9-1"/>
</dbReference>
<dbReference type="CCDS" id="CCDS63094.1">
    <molecule id="Q9NYB9-4"/>
</dbReference>
<dbReference type="PIR" id="G01936">
    <property type="entry name" value="G01936"/>
</dbReference>
<dbReference type="RefSeq" id="NP_001269854.1">
    <property type="nucleotide sequence ID" value="NM_001282925.1"/>
</dbReference>
<dbReference type="RefSeq" id="NP_001269855.1">
    <property type="nucleotide sequence ID" value="NM_001282926.1"/>
</dbReference>
<dbReference type="RefSeq" id="NP_001269856.1">
    <molecule id="Q9NYB9-3"/>
    <property type="nucleotide sequence ID" value="NM_001282927.2"/>
</dbReference>
<dbReference type="RefSeq" id="NP_001362683.1">
    <molecule id="Q9NYB9-3"/>
    <property type="nucleotide sequence ID" value="NM_001375754.1"/>
</dbReference>
<dbReference type="RefSeq" id="NP_005750.4">
    <molecule id="Q9NYB9-2"/>
    <property type="nucleotide sequence ID" value="NM_005759.5"/>
</dbReference>
<dbReference type="RefSeq" id="XP_006712248.1">
    <property type="nucleotide sequence ID" value="XM_006712185.1"/>
</dbReference>
<dbReference type="PDB" id="2ED0">
    <property type="method" value="NMR"/>
    <property type="chains" value="A=444-508"/>
</dbReference>
<dbReference type="PDB" id="3P8C">
    <property type="method" value="X-ray"/>
    <property type="resolution" value="2.29 A"/>
    <property type="chains" value="F=1-154"/>
</dbReference>
<dbReference type="PDB" id="4N78">
    <property type="method" value="X-ray"/>
    <property type="resolution" value="2.43 A"/>
    <property type="chains" value="F=1-513"/>
</dbReference>
<dbReference type="PDB" id="7USC">
    <property type="method" value="EM"/>
    <property type="resolution" value="3.00 A"/>
    <property type="chains" value="E=1-154"/>
</dbReference>
<dbReference type="PDB" id="7USD">
    <property type="method" value="EM"/>
    <property type="resolution" value="3.00 A"/>
    <property type="chains" value="E=1-154"/>
</dbReference>
<dbReference type="PDB" id="7USE">
    <property type="method" value="EM"/>
    <property type="resolution" value="3.00 A"/>
    <property type="chains" value="E=1-154"/>
</dbReference>
<dbReference type="PDBsum" id="2ED0"/>
<dbReference type="PDBsum" id="3P8C"/>
<dbReference type="PDBsum" id="4N78"/>
<dbReference type="PDBsum" id="7USC"/>
<dbReference type="PDBsum" id="7USD"/>
<dbReference type="PDBsum" id="7USE"/>
<dbReference type="BMRB" id="Q9NYB9"/>
<dbReference type="SMR" id="Q9NYB9"/>
<dbReference type="BioGRID" id="115454">
    <property type="interactions" value="298"/>
</dbReference>
<dbReference type="DIP" id="DIP-37566N"/>
<dbReference type="FunCoup" id="Q9NYB9">
    <property type="interactions" value="1508"/>
</dbReference>
<dbReference type="IntAct" id="Q9NYB9">
    <property type="interactions" value="262"/>
</dbReference>
<dbReference type="MINT" id="Q9NYB9"/>
<dbReference type="STRING" id="9606.ENSP00000295851"/>
<dbReference type="MoonDB" id="Q9NYB9">
    <property type="type" value="Predicted"/>
</dbReference>
<dbReference type="GlyGen" id="Q9NYB9">
    <property type="glycosylation" value="3 sites, 1 O-linked glycan (3 sites)"/>
</dbReference>
<dbReference type="iPTMnet" id="Q9NYB9"/>
<dbReference type="PhosphoSitePlus" id="Q9NYB9"/>
<dbReference type="BioMuta" id="ABI2"/>
<dbReference type="DMDM" id="50400673"/>
<dbReference type="CPTAC" id="CPTAC-1593"/>
<dbReference type="jPOST" id="Q9NYB9"/>
<dbReference type="MassIVE" id="Q9NYB9"/>
<dbReference type="PaxDb" id="9606-ENSP00000295851"/>
<dbReference type="PeptideAtlas" id="Q9NYB9"/>
<dbReference type="ProteomicsDB" id="83209">
    <molecule id="Q9NYB9-1"/>
</dbReference>
<dbReference type="ProteomicsDB" id="83210">
    <molecule id="Q9NYB9-2"/>
</dbReference>
<dbReference type="ProteomicsDB" id="83211">
    <molecule id="Q9NYB9-3"/>
</dbReference>
<dbReference type="ProteomicsDB" id="83212">
    <molecule id="Q9NYB9-4"/>
</dbReference>
<dbReference type="Pumba" id="Q9NYB9"/>
<dbReference type="Antibodypedia" id="34165">
    <property type="antibodies" value="224 antibodies from 31 providers"/>
</dbReference>
<dbReference type="DNASU" id="10152"/>
<dbReference type="Ensembl" id="ENST00000261017.9">
    <molecule id="Q9NYB9-2"/>
    <property type="protein sequence ID" value="ENSP00000261017.5"/>
    <property type="gene ID" value="ENSG00000138443.17"/>
</dbReference>
<dbReference type="GeneID" id="10152"/>
<dbReference type="KEGG" id="hsa:10152"/>
<dbReference type="UCSC" id="uc002uzz.5">
    <molecule id="Q9NYB9-1"/>
    <property type="organism name" value="human"/>
</dbReference>
<dbReference type="AGR" id="HGNC:24011"/>
<dbReference type="CTD" id="10152"/>
<dbReference type="DisGeNET" id="10152"/>
<dbReference type="GeneCards" id="ABI2"/>
<dbReference type="HGNC" id="HGNC:24011">
    <property type="gene designation" value="ABI2"/>
</dbReference>
<dbReference type="HPA" id="ENSG00000138443">
    <property type="expression patterns" value="Low tissue specificity"/>
</dbReference>
<dbReference type="MIM" id="606442">
    <property type="type" value="gene"/>
</dbReference>
<dbReference type="neXtProt" id="NX_Q9NYB9"/>
<dbReference type="OpenTargets" id="ENSG00000138443"/>
<dbReference type="PharmGKB" id="PA134977642"/>
<dbReference type="VEuPathDB" id="HostDB:ENSG00000138443"/>
<dbReference type="eggNOG" id="KOG2546">
    <property type="taxonomic scope" value="Eukaryota"/>
</dbReference>
<dbReference type="GeneTree" id="ENSGT00940000156089"/>
<dbReference type="InParanoid" id="Q9NYB9"/>
<dbReference type="OrthoDB" id="2159336at2759"/>
<dbReference type="PAN-GO" id="Q9NYB9">
    <property type="GO annotations" value="2 GO annotations based on evolutionary models"/>
</dbReference>
<dbReference type="PhylomeDB" id="Q9NYB9"/>
<dbReference type="TreeFam" id="TF314303"/>
<dbReference type="PathwayCommons" id="Q9NYB9"/>
<dbReference type="Reactome" id="R-HSA-2029482">
    <property type="pathway name" value="Regulation of actin dynamics for phagocytic cup formation"/>
</dbReference>
<dbReference type="Reactome" id="R-HSA-4420097">
    <property type="pathway name" value="VEGFA-VEGFR2 Pathway"/>
</dbReference>
<dbReference type="Reactome" id="R-HSA-5663213">
    <property type="pathway name" value="RHO GTPases Activate WASPs and WAVEs"/>
</dbReference>
<dbReference type="Reactome" id="R-HSA-9013149">
    <property type="pathway name" value="RAC1 GTPase cycle"/>
</dbReference>
<dbReference type="Reactome" id="R-HSA-9013404">
    <property type="pathway name" value="RAC2 GTPase cycle"/>
</dbReference>
<dbReference type="Reactome" id="R-HSA-9013423">
    <property type="pathway name" value="RAC3 GTPase cycle"/>
</dbReference>
<dbReference type="Reactome" id="R-HSA-9664422">
    <property type="pathway name" value="FCGR3A-mediated phagocytosis"/>
</dbReference>
<dbReference type="SignaLink" id="Q9NYB9"/>
<dbReference type="SIGNOR" id="Q9NYB9"/>
<dbReference type="BioGRID-ORCS" id="10152">
    <property type="hits" value="10 hits in 1158 CRISPR screens"/>
</dbReference>
<dbReference type="CD-CODE" id="FB4E32DD">
    <property type="entry name" value="Presynaptic clusters and postsynaptic densities"/>
</dbReference>
<dbReference type="ChiTaRS" id="ABI2">
    <property type="organism name" value="human"/>
</dbReference>
<dbReference type="EvolutionaryTrace" id="Q9NYB9"/>
<dbReference type="GeneWiki" id="ABI2"/>
<dbReference type="GenomeRNAi" id="10152"/>
<dbReference type="Pharos" id="Q9NYB9">
    <property type="development level" value="Tbio"/>
</dbReference>
<dbReference type="PRO" id="PR:Q9NYB9"/>
<dbReference type="Proteomes" id="UP000005640">
    <property type="component" value="Chromosome 2"/>
</dbReference>
<dbReference type="RNAct" id="Q9NYB9">
    <property type="molecule type" value="protein"/>
</dbReference>
<dbReference type="Bgee" id="ENSG00000138443">
    <property type="expression patterns" value="Expressed in Brodmann (1909) area 23 and 194 other cell types or tissues"/>
</dbReference>
<dbReference type="ExpressionAtlas" id="Q9NYB9">
    <property type="expression patterns" value="baseline and differential"/>
</dbReference>
<dbReference type="GO" id="GO:0098858">
    <property type="term" value="C:actin-based cell projection"/>
    <property type="evidence" value="ECO:0000318"/>
    <property type="project" value="GO_Central"/>
</dbReference>
<dbReference type="GO" id="GO:0005912">
    <property type="term" value="C:adherens junction"/>
    <property type="evidence" value="ECO:0000314"/>
    <property type="project" value="UniProtKB"/>
</dbReference>
<dbReference type="GO" id="GO:0005737">
    <property type="term" value="C:cytoplasm"/>
    <property type="evidence" value="ECO:0000304"/>
    <property type="project" value="UniProtKB"/>
</dbReference>
<dbReference type="GO" id="GO:0005856">
    <property type="term" value="C:cytoskeleton"/>
    <property type="evidence" value="ECO:0007669"/>
    <property type="project" value="UniProtKB-SubCell"/>
</dbReference>
<dbReference type="GO" id="GO:0005829">
    <property type="term" value="C:cytosol"/>
    <property type="evidence" value="ECO:0000314"/>
    <property type="project" value="MGI"/>
</dbReference>
<dbReference type="GO" id="GO:0043197">
    <property type="term" value="C:dendritic spine"/>
    <property type="evidence" value="ECO:0000250"/>
    <property type="project" value="UniProtKB"/>
</dbReference>
<dbReference type="GO" id="GO:0032433">
    <property type="term" value="C:filopodium tip"/>
    <property type="evidence" value="ECO:0000314"/>
    <property type="project" value="UniProtKB"/>
</dbReference>
<dbReference type="GO" id="GO:0030027">
    <property type="term" value="C:lamellipodium"/>
    <property type="evidence" value="ECO:0000314"/>
    <property type="project" value="UniProtKB"/>
</dbReference>
<dbReference type="GO" id="GO:0005634">
    <property type="term" value="C:nucleus"/>
    <property type="evidence" value="ECO:0007669"/>
    <property type="project" value="UniProtKB-SubCell"/>
</dbReference>
<dbReference type="GO" id="GO:0031209">
    <property type="term" value="C:SCAR complex"/>
    <property type="evidence" value="ECO:0000314"/>
    <property type="project" value="UniProtKB"/>
</dbReference>
<dbReference type="GO" id="GO:0008093">
    <property type="term" value="F:cytoskeletal anchor activity"/>
    <property type="evidence" value="ECO:0000304"/>
    <property type="project" value="UniProtKB"/>
</dbReference>
<dbReference type="GO" id="GO:0042802">
    <property type="term" value="F:identical protein binding"/>
    <property type="evidence" value="ECO:0000353"/>
    <property type="project" value="IntAct"/>
</dbReference>
<dbReference type="GO" id="GO:0019900">
    <property type="term" value="F:kinase binding"/>
    <property type="evidence" value="ECO:0000303"/>
    <property type="project" value="UniProtKB"/>
</dbReference>
<dbReference type="GO" id="GO:0070064">
    <property type="term" value="F:proline-rich region binding"/>
    <property type="evidence" value="ECO:0000353"/>
    <property type="project" value="UniProtKB"/>
</dbReference>
<dbReference type="GO" id="GO:0017124">
    <property type="term" value="F:SH3 domain binding"/>
    <property type="evidence" value="ECO:0000353"/>
    <property type="project" value="UniProtKB"/>
</dbReference>
<dbReference type="GO" id="GO:0035591">
    <property type="term" value="F:signaling adaptor activity"/>
    <property type="evidence" value="ECO:0000314"/>
    <property type="project" value="ARUK-UCL"/>
</dbReference>
<dbReference type="GO" id="GO:0031625">
    <property type="term" value="F:ubiquitin protein ligase binding"/>
    <property type="evidence" value="ECO:0000353"/>
    <property type="project" value="BHF-UCL"/>
</dbReference>
<dbReference type="GO" id="GO:0008154">
    <property type="term" value="P:actin polymerization or depolymerization"/>
    <property type="evidence" value="ECO:0000303"/>
    <property type="project" value="UniProtKB"/>
</dbReference>
<dbReference type="GO" id="GO:0016477">
    <property type="term" value="P:cell migration"/>
    <property type="evidence" value="ECO:0000304"/>
    <property type="project" value="UniProtKB"/>
</dbReference>
<dbReference type="GO" id="GO:0048858">
    <property type="term" value="P:cell projection morphogenesis"/>
    <property type="evidence" value="ECO:0000318"/>
    <property type="project" value="GO_Central"/>
</dbReference>
<dbReference type="GO" id="GO:0007010">
    <property type="term" value="P:cytoskeleton organization"/>
    <property type="evidence" value="ECO:0000304"/>
    <property type="project" value="UniProtKB"/>
</dbReference>
<dbReference type="GO" id="GO:0070309">
    <property type="term" value="P:lens fiber cell morphogenesis"/>
    <property type="evidence" value="ECO:0000250"/>
    <property type="project" value="UniProtKB"/>
</dbReference>
<dbReference type="GO" id="GO:0000423">
    <property type="term" value="P:mitophagy"/>
    <property type="evidence" value="ECO:0000314"/>
    <property type="project" value="UniProt"/>
</dbReference>
<dbReference type="GO" id="GO:0001764">
    <property type="term" value="P:neuron migration"/>
    <property type="evidence" value="ECO:0000318"/>
    <property type="project" value="GO_Central"/>
</dbReference>
<dbReference type="GO" id="GO:0018108">
    <property type="term" value="P:peptidyl-tyrosine phosphorylation"/>
    <property type="evidence" value="ECO:0000314"/>
    <property type="project" value="MGI"/>
</dbReference>
<dbReference type="GO" id="GO:2000601">
    <property type="term" value="P:positive regulation of Arp2/3 complex-mediated actin nucleation"/>
    <property type="evidence" value="ECO:0000314"/>
    <property type="project" value="UniProtKB"/>
</dbReference>
<dbReference type="GO" id="GO:0010592">
    <property type="term" value="P:positive regulation of lamellipodium assembly"/>
    <property type="evidence" value="ECO:0000314"/>
    <property type="project" value="ARUK-UCL"/>
</dbReference>
<dbReference type="GO" id="GO:0016601">
    <property type="term" value="P:Rac protein signal transduction"/>
    <property type="evidence" value="ECO:0000314"/>
    <property type="project" value="UniProtKB"/>
</dbReference>
<dbReference type="GO" id="GO:0061001">
    <property type="term" value="P:regulation of dendritic spine morphogenesis"/>
    <property type="evidence" value="ECO:0000250"/>
    <property type="project" value="UniProtKB"/>
</dbReference>
<dbReference type="GO" id="GO:0045186">
    <property type="term" value="P:zonula adherens assembly"/>
    <property type="evidence" value="ECO:0000315"/>
    <property type="project" value="UniProtKB"/>
</dbReference>
<dbReference type="CDD" id="cd11972">
    <property type="entry name" value="SH3_Abi2"/>
    <property type="match status" value="1"/>
</dbReference>
<dbReference type="DisProt" id="DP02386"/>
<dbReference type="FunFam" id="2.30.30.40:FF:000002">
    <property type="entry name" value="abl interactor 1 isoform X1"/>
    <property type="match status" value="1"/>
</dbReference>
<dbReference type="Gene3D" id="6.10.140.1620">
    <property type="match status" value="1"/>
</dbReference>
<dbReference type="Gene3D" id="2.30.30.40">
    <property type="entry name" value="SH3 Domains"/>
    <property type="match status" value="1"/>
</dbReference>
<dbReference type="InterPro" id="IPR028457">
    <property type="entry name" value="ABI"/>
</dbReference>
<dbReference type="InterPro" id="IPR035726">
    <property type="entry name" value="Abi2_SH3"/>
</dbReference>
<dbReference type="InterPro" id="IPR012849">
    <property type="entry name" value="Abl-interactor_HHR_dom"/>
</dbReference>
<dbReference type="InterPro" id="IPR036028">
    <property type="entry name" value="SH3-like_dom_sf"/>
</dbReference>
<dbReference type="InterPro" id="IPR001452">
    <property type="entry name" value="SH3_domain"/>
</dbReference>
<dbReference type="InterPro" id="IPR000727">
    <property type="entry name" value="T_SNARE_dom"/>
</dbReference>
<dbReference type="PANTHER" id="PTHR10460:SF26">
    <property type="entry name" value="ABL INTERACTOR 2"/>
    <property type="match status" value="1"/>
</dbReference>
<dbReference type="PANTHER" id="PTHR10460">
    <property type="entry name" value="ABL INTERACTOR FAMILY MEMBER"/>
    <property type="match status" value="1"/>
</dbReference>
<dbReference type="Pfam" id="PF07815">
    <property type="entry name" value="Abi_HHR"/>
    <property type="match status" value="1"/>
</dbReference>
<dbReference type="Pfam" id="PF00018">
    <property type="entry name" value="SH3_1"/>
    <property type="match status" value="1"/>
</dbReference>
<dbReference type="PRINTS" id="PR01217">
    <property type="entry name" value="PRICHEXTENSN"/>
</dbReference>
<dbReference type="PRINTS" id="PR00452">
    <property type="entry name" value="SH3DOMAIN"/>
</dbReference>
<dbReference type="SMART" id="SM00326">
    <property type="entry name" value="SH3"/>
    <property type="match status" value="1"/>
</dbReference>
<dbReference type="SUPFAM" id="SSF50044">
    <property type="entry name" value="SH3-domain"/>
    <property type="match status" value="1"/>
</dbReference>
<dbReference type="PROSITE" id="PS50002">
    <property type="entry name" value="SH3"/>
    <property type="match status" value="1"/>
</dbReference>
<dbReference type="PROSITE" id="PS50192">
    <property type="entry name" value="T_SNARE"/>
    <property type="match status" value="1"/>
</dbReference>